<dbReference type="EMBL" id="M64673">
    <property type="protein sequence ID" value="AAA52695.1"/>
    <property type="molecule type" value="mRNA"/>
</dbReference>
<dbReference type="EMBL" id="AK290975">
    <property type="protein sequence ID" value="BAF83664.1"/>
    <property type="molecule type" value="mRNA"/>
</dbReference>
<dbReference type="EMBL" id="BT007351">
    <property type="protein sequence ID" value="AAP36015.1"/>
    <property type="molecule type" value="mRNA"/>
</dbReference>
<dbReference type="EMBL" id="AC110280">
    <property type="status" value="NOT_ANNOTATED_CDS"/>
    <property type="molecule type" value="Genomic_DNA"/>
</dbReference>
<dbReference type="EMBL" id="AF205589">
    <property type="status" value="NOT_ANNOTATED_CDS"/>
    <property type="molecule type" value="Genomic_DNA"/>
</dbReference>
<dbReference type="EMBL" id="BC014638">
    <property type="protein sequence ID" value="AAH14638.1"/>
    <property type="molecule type" value="mRNA"/>
</dbReference>
<dbReference type="CCDS" id="CCDS6419.1">
    <molecule id="Q00613-1"/>
</dbReference>
<dbReference type="PIR" id="A41137">
    <property type="entry name" value="A41137"/>
</dbReference>
<dbReference type="RefSeq" id="NP_005517.1">
    <molecule id="Q00613-1"/>
    <property type="nucleotide sequence ID" value="NM_005526.4"/>
</dbReference>
<dbReference type="RefSeq" id="XP_016868866.1">
    <molecule id="Q00613-2"/>
    <property type="nucleotide sequence ID" value="XM_017013377.3"/>
</dbReference>
<dbReference type="RefSeq" id="XP_054188170.1">
    <molecule id="Q00613-2"/>
    <property type="nucleotide sequence ID" value="XM_054332195.1"/>
</dbReference>
<dbReference type="PDB" id="2LDU">
    <property type="method" value="NMR"/>
    <property type="chains" value="A=10-123"/>
</dbReference>
<dbReference type="PDB" id="5D5U">
    <property type="method" value="X-ray"/>
    <property type="resolution" value="2.91 A"/>
    <property type="chains" value="B=1-120"/>
</dbReference>
<dbReference type="PDB" id="5D5V">
    <property type="method" value="X-ray"/>
    <property type="resolution" value="2.55 A"/>
    <property type="chains" value="B/D=1-120"/>
</dbReference>
<dbReference type="PDB" id="5HDG">
    <property type="method" value="X-ray"/>
    <property type="resolution" value="1.70 A"/>
    <property type="chains" value="A=15-120"/>
</dbReference>
<dbReference type="PDB" id="5HDN">
    <property type="method" value="X-ray"/>
    <property type="resolution" value="1.68 A"/>
    <property type="chains" value="A/B/C/D=15-120"/>
</dbReference>
<dbReference type="PDB" id="7DCJ">
    <property type="method" value="X-ray"/>
    <property type="resolution" value="2.00 A"/>
    <property type="chains" value="A/B=15-120"/>
</dbReference>
<dbReference type="PDB" id="7DCS">
    <property type="method" value="X-ray"/>
    <property type="resolution" value="2.40 A"/>
    <property type="chains" value="A/B/C/D/E/F=15-120"/>
</dbReference>
<dbReference type="PDB" id="7DCT">
    <property type="method" value="X-ray"/>
    <property type="resolution" value="2.36 A"/>
    <property type="chains" value="A/B/C/D/E/F=15-120"/>
</dbReference>
<dbReference type="PDBsum" id="2LDU"/>
<dbReference type="PDBsum" id="5D5U"/>
<dbReference type="PDBsum" id="5D5V"/>
<dbReference type="PDBsum" id="5HDG"/>
<dbReference type="PDBsum" id="5HDN"/>
<dbReference type="PDBsum" id="7DCJ"/>
<dbReference type="PDBsum" id="7DCS"/>
<dbReference type="PDBsum" id="7DCT"/>
<dbReference type="BMRB" id="Q00613"/>
<dbReference type="SMR" id="Q00613"/>
<dbReference type="BioGRID" id="109530">
    <property type="interactions" value="617"/>
</dbReference>
<dbReference type="CORUM" id="Q00613"/>
<dbReference type="DIP" id="DIP-35670N"/>
<dbReference type="FunCoup" id="Q00613">
    <property type="interactions" value="1468"/>
</dbReference>
<dbReference type="IntAct" id="Q00613">
    <property type="interactions" value="69"/>
</dbReference>
<dbReference type="MINT" id="Q00613"/>
<dbReference type="STRING" id="9606.ENSP00000431512"/>
<dbReference type="BindingDB" id="Q00613"/>
<dbReference type="ChEMBL" id="CHEMBL5869"/>
<dbReference type="DrugBank" id="DB06258">
    <property type="generic name" value="Bimoclomol"/>
</dbReference>
<dbReference type="MoonDB" id="Q00613">
    <property type="type" value="Predicted"/>
</dbReference>
<dbReference type="GlyGen" id="Q00613">
    <property type="glycosylation" value="5 sites, 1 N-linked glycan (1 site), 1 O-linked glycan (3 sites)"/>
</dbReference>
<dbReference type="iPTMnet" id="Q00613"/>
<dbReference type="MetOSite" id="Q00613"/>
<dbReference type="PhosphoSitePlus" id="Q00613"/>
<dbReference type="SwissPalm" id="Q00613"/>
<dbReference type="BioMuta" id="HSF1"/>
<dbReference type="DMDM" id="462333"/>
<dbReference type="jPOST" id="Q00613"/>
<dbReference type="MassIVE" id="Q00613"/>
<dbReference type="PaxDb" id="9606-ENSP00000431512"/>
<dbReference type="PeptideAtlas" id="Q00613"/>
<dbReference type="ProteomicsDB" id="57864">
    <molecule id="Q00613-1"/>
</dbReference>
<dbReference type="ProteomicsDB" id="57865">
    <molecule id="Q00613-2"/>
</dbReference>
<dbReference type="Pumba" id="Q00613"/>
<dbReference type="Antibodypedia" id="1848">
    <property type="antibodies" value="1701 antibodies from 51 providers"/>
</dbReference>
<dbReference type="DNASU" id="3297"/>
<dbReference type="Ensembl" id="ENST00000528838.6">
    <molecule id="Q00613-1"/>
    <property type="protein sequence ID" value="ENSP00000431512.1"/>
    <property type="gene ID" value="ENSG00000185122.11"/>
</dbReference>
<dbReference type="Ensembl" id="ENST00000646252.2">
    <molecule id="Q00613-1"/>
    <property type="protein sequence ID" value="ENSP00000493830.1"/>
    <property type="gene ID" value="ENSG00000284774.2"/>
</dbReference>
<dbReference type="GeneID" id="3297"/>
<dbReference type="KEGG" id="hsa:3297"/>
<dbReference type="MANE-Select" id="ENST00000528838.6">
    <property type="protein sequence ID" value="ENSP00000431512.1"/>
    <property type="RefSeq nucleotide sequence ID" value="NM_005526.4"/>
    <property type="RefSeq protein sequence ID" value="NP_005517.1"/>
</dbReference>
<dbReference type="UCSC" id="uc003zbt.5">
    <molecule id="Q00613-1"/>
    <property type="organism name" value="human"/>
</dbReference>
<dbReference type="AGR" id="HGNC:5224"/>
<dbReference type="CTD" id="3297"/>
<dbReference type="DisGeNET" id="3297"/>
<dbReference type="GeneCards" id="HSF1"/>
<dbReference type="HGNC" id="HGNC:5224">
    <property type="gene designation" value="HSF1"/>
</dbReference>
<dbReference type="HPA" id="ENSG00000185122">
    <property type="expression patterns" value="Low tissue specificity"/>
</dbReference>
<dbReference type="MIM" id="140580">
    <property type="type" value="gene"/>
</dbReference>
<dbReference type="neXtProt" id="NX_Q00613"/>
<dbReference type="OpenTargets" id="ENSG00000185122"/>
<dbReference type="PharmGKB" id="PA29493"/>
<dbReference type="VEuPathDB" id="HostDB:ENSG00000185122"/>
<dbReference type="eggNOG" id="KOG0627">
    <property type="taxonomic scope" value="Eukaryota"/>
</dbReference>
<dbReference type="GeneTree" id="ENSGT00940000158421"/>
<dbReference type="HOGENOM" id="CLU_038829_2_0_1"/>
<dbReference type="InParanoid" id="Q00613"/>
<dbReference type="OMA" id="LICWSPQ"/>
<dbReference type="OrthoDB" id="60033at2759"/>
<dbReference type="PAN-GO" id="Q00613">
    <property type="GO annotations" value="4 GO annotations based on evolutionary models"/>
</dbReference>
<dbReference type="PhylomeDB" id="Q00613"/>
<dbReference type="TreeFam" id="TF330401"/>
<dbReference type="PathwayCommons" id="Q00613"/>
<dbReference type="Reactome" id="R-HSA-3371453">
    <property type="pathway name" value="Regulation of HSF1-mediated heat shock response"/>
</dbReference>
<dbReference type="Reactome" id="R-HSA-3371511">
    <property type="pathway name" value="HSF1 activation"/>
</dbReference>
<dbReference type="Reactome" id="R-HSA-3371568">
    <property type="pathway name" value="Attenuation phase"/>
</dbReference>
<dbReference type="Reactome" id="R-HSA-3371571">
    <property type="pathway name" value="HSF1-dependent transactivation"/>
</dbReference>
<dbReference type="Reactome" id="R-HSA-9646399">
    <property type="pathway name" value="Aggrephagy"/>
</dbReference>
<dbReference type="Reactome" id="R-HSA-9841251">
    <property type="pathway name" value="Mitochondrial unfolded protein response (UPRmt)"/>
</dbReference>
<dbReference type="SignaLink" id="Q00613"/>
<dbReference type="SIGNOR" id="Q00613"/>
<dbReference type="BioGRID-ORCS" id="3297">
    <property type="hits" value="263 hits in 1179 CRISPR screens"/>
</dbReference>
<dbReference type="CD-CODE" id="38EC0B30">
    <property type="entry name" value="Transcriptional condensate"/>
</dbReference>
<dbReference type="CD-CODE" id="81D2A7B6">
    <property type="entry name" value="Nuclear stress body"/>
</dbReference>
<dbReference type="CD-CODE" id="8C2F96ED">
    <property type="entry name" value="Centrosome"/>
</dbReference>
<dbReference type="CD-CODE" id="DEE660B4">
    <property type="entry name" value="Stress granule"/>
</dbReference>
<dbReference type="ChiTaRS" id="HSF1">
    <property type="organism name" value="human"/>
</dbReference>
<dbReference type="EvolutionaryTrace" id="Q00613"/>
<dbReference type="GeneWiki" id="HSF1"/>
<dbReference type="GenomeRNAi" id="3297"/>
<dbReference type="Pharos" id="Q00613">
    <property type="development level" value="Tchem"/>
</dbReference>
<dbReference type="PRO" id="PR:Q00613"/>
<dbReference type="Proteomes" id="UP000005640">
    <property type="component" value="Chromosome 8"/>
</dbReference>
<dbReference type="RNAct" id="Q00613">
    <property type="molecule type" value="protein"/>
</dbReference>
<dbReference type="Bgee" id="ENSG00000185122">
    <property type="expression patterns" value="Expressed in apex of heart and 99 other cell types or tissues"/>
</dbReference>
<dbReference type="ExpressionAtlas" id="Q00613">
    <property type="expression patterns" value="baseline and differential"/>
</dbReference>
<dbReference type="GO" id="GO:0005813">
    <property type="term" value="C:centrosome"/>
    <property type="evidence" value="ECO:0000314"/>
    <property type="project" value="UniProtKB"/>
</dbReference>
<dbReference type="GO" id="GO:0000785">
    <property type="term" value="C:chromatin"/>
    <property type="evidence" value="ECO:0000247"/>
    <property type="project" value="NTNU_SB"/>
</dbReference>
<dbReference type="GO" id="GO:0005737">
    <property type="term" value="C:cytoplasm"/>
    <property type="evidence" value="ECO:0000314"/>
    <property type="project" value="UniProtKB"/>
</dbReference>
<dbReference type="GO" id="GO:0005829">
    <property type="term" value="C:cytosol"/>
    <property type="evidence" value="ECO:0000314"/>
    <property type="project" value="HPA"/>
</dbReference>
<dbReference type="GO" id="GO:0000791">
    <property type="term" value="C:euchromatin"/>
    <property type="evidence" value="ECO:0007669"/>
    <property type="project" value="Ensembl"/>
</dbReference>
<dbReference type="GO" id="GO:0000792">
    <property type="term" value="C:heterochromatin"/>
    <property type="evidence" value="ECO:0007669"/>
    <property type="project" value="Ensembl"/>
</dbReference>
<dbReference type="GO" id="GO:0000776">
    <property type="term" value="C:kinetochore"/>
    <property type="evidence" value="ECO:0000314"/>
    <property type="project" value="UniProtKB"/>
</dbReference>
<dbReference type="GO" id="GO:0097431">
    <property type="term" value="C:mitotic spindle pole"/>
    <property type="evidence" value="ECO:0000314"/>
    <property type="project" value="UniProtKB"/>
</dbReference>
<dbReference type="GO" id="GO:0097165">
    <property type="term" value="C:nuclear stress granule"/>
    <property type="evidence" value="ECO:0000314"/>
    <property type="project" value="UniProtKB"/>
</dbReference>
<dbReference type="GO" id="GO:0005654">
    <property type="term" value="C:nucleoplasm"/>
    <property type="evidence" value="ECO:0000314"/>
    <property type="project" value="HPA"/>
</dbReference>
<dbReference type="GO" id="GO:0005634">
    <property type="term" value="C:nucleus"/>
    <property type="evidence" value="ECO:0000314"/>
    <property type="project" value="UniProtKB"/>
</dbReference>
<dbReference type="GO" id="GO:0048471">
    <property type="term" value="C:perinuclear region of cytoplasm"/>
    <property type="evidence" value="ECO:0000314"/>
    <property type="project" value="UniProtKB"/>
</dbReference>
<dbReference type="GO" id="GO:0016605">
    <property type="term" value="C:PML body"/>
    <property type="evidence" value="ECO:0000314"/>
    <property type="project" value="UniProtKB"/>
</dbReference>
<dbReference type="GO" id="GO:0045120">
    <property type="term" value="C:pronucleus"/>
    <property type="evidence" value="ECO:0007669"/>
    <property type="project" value="Ensembl"/>
</dbReference>
<dbReference type="GO" id="GO:0101031">
    <property type="term" value="C:protein folding chaperone complex"/>
    <property type="evidence" value="ECO:0000314"/>
    <property type="project" value="GO_Central"/>
</dbReference>
<dbReference type="GO" id="GO:1990904">
    <property type="term" value="C:ribonucleoprotein complex"/>
    <property type="evidence" value="ECO:0000314"/>
    <property type="project" value="UniProtKB"/>
</dbReference>
<dbReference type="GO" id="GO:0031490">
    <property type="term" value="F:chromatin DNA binding"/>
    <property type="evidence" value="ECO:0000314"/>
    <property type="project" value="UniProtKB"/>
</dbReference>
<dbReference type="GO" id="GO:0003677">
    <property type="term" value="F:DNA binding"/>
    <property type="evidence" value="ECO:0000314"/>
    <property type="project" value="UniProtKB"/>
</dbReference>
<dbReference type="GO" id="GO:0001228">
    <property type="term" value="F:DNA-binding transcription activator activity, RNA polymerase II-specific"/>
    <property type="evidence" value="ECO:0000314"/>
    <property type="project" value="UniProtKB"/>
</dbReference>
<dbReference type="GO" id="GO:0003700">
    <property type="term" value="F:DNA-binding transcription factor activity"/>
    <property type="evidence" value="ECO:0000304"/>
    <property type="project" value="ProtInc"/>
</dbReference>
<dbReference type="GO" id="GO:0000981">
    <property type="term" value="F:DNA-binding transcription factor activity, RNA polymerase II-specific"/>
    <property type="evidence" value="ECO:0000314"/>
    <property type="project" value="ARUK-UCL"/>
</dbReference>
<dbReference type="GO" id="GO:0001227">
    <property type="term" value="F:DNA-binding transcription repressor activity, RNA polymerase II-specific"/>
    <property type="evidence" value="ECO:0000314"/>
    <property type="project" value="NTNU_SB"/>
</dbReference>
<dbReference type="GO" id="GO:0140296">
    <property type="term" value="F:general transcription initiation factor binding"/>
    <property type="evidence" value="ECO:0000353"/>
    <property type="project" value="UniProtKB"/>
</dbReference>
<dbReference type="GO" id="GO:0031072">
    <property type="term" value="F:heat shock protein binding"/>
    <property type="evidence" value="ECO:0000314"/>
    <property type="project" value="UniProtKB"/>
</dbReference>
<dbReference type="GO" id="GO:0051879">
    <property type="term" value="F:Hsp90 protein binding"/>
    <property type="evidence" value="ECO:0000314"/>
    <property type="project" value="UniProtKB"/>
</dbReference>
<dbReference type="GO" id="GO:0042802">
    <property type="term" value="F:identical protein binding"/>
    <property type="evidence" value="ECO:0000314"/>
    <property type="project" value="UniProtKB"/>
</dbReference>
<dbReference type="GO" id="GO:1990841">
    <property type="term" value="F:promoter-specific chromatin binding"/>
    <property type="evidence" value="ECO:0007669"/>
    <property type="project" value="Ensembl"/>
</dbReference>
<dbReference type="GO" id="GO:0046982">
    <property type="term" value="F:protein heterodimerization activity"/>
    <property type="evidence" value="ECO:0000314"/>
    <property type="project" value="UniProtKB"/>
</dbReference>
<dbReference type="GO" id="GO:0019901">
    <property type="term" value="F:protein kinase binding"/>
    <property type="evidence" value="ECO:0000353"/>
    <property type="project" value="UniProtKB"/>
</dbReference>
<dbReference type="GO" id="GO:0000978">
    <property type="term" value="F:RNA polymerase II cis-regulatory region sequence-specific DNA binding"/>
    <property type="evidence" value="ECO:0000314"/>
    <property type="project" value="NTNU_SB"/>
</dbReference>
<dbReference type="GO" id="GO:0001162">
    <property type="term" value="F:RNA polymerase II intronic transcription regulatory region sequence-specific DNA binding"/>
    <property type="evidence" value="ECO:0000314"/>
    <property type="project" value="MGI"/>
</dbReference>
<dbReference type="GO" id="GO:0043565">
    <property type="term" value="F:sequence-specific DNA binding"/>
    <property type="evidence" value="ECO:0000314"/>
    <property type="project" value="UniProtKB"/>
</dbReference>
<dbReference type="GO" id="GO:1990837">
    <property type="term" value="F:sequence-specific double-stranded DNA binding"/>
    <property type="evidence" value="ECO:0000314"/>
    <property type="project" value="ARUK-UCL"/>
</dbReference>
<dbReference type="GO" id="GO:0098847">
    <property type="term" value="F:sequence-specific single stranded DNA binding"/>
    <property type="evidence" value="ECO:0007669"/>
    <property type="project" value="Ensembl"/>
</dbReference>
<dbReference type="GO" id="GO:0097677">
    <property type="term" value="F:STAT family protein binding"/>
    <property type="evidence" value="ECO:0007669"/>
    <property type="project" value="Ensembl"/>
</dbReference>
<dbReference type="GO" id="GO:0000976">
    <property type="term" value="F:transcription cis-regulatory region binding"/>
    <property type="evidence" value="ECO:0000314"/>
    <property type="project" value="ARUK-UCL"/>
</dbReference>
<dbReference type="GO" id="GO:0061770">
    <property type="term" value="F:translation elongation factor binding"/>
    <property type="evidence" value="ECO:0000314"/>
    <property type="project" value="UniProtKB"/>
</dbReference>
<dbReference type="GO" id="GO:1904385">
    <property type="term" value="P:cellular response to angiotensin"/>
    <property type="evidence" value="ECO:0007669"/>
    <property type="project" value="Ensembl"/>
</dbReference>
<dbReference type="GO" id="GO:0071276">
    <property type="term" value="P:cellular response to cadmium ion"/>
    <property type="evidence" value="ECO:0000314"/>
    <property type="project" value="UniProtKB"/>
</dbReference>
<dbReference type="GO" id="GO:0071280">
    <property type="term" value="P:cellular response to copper ion"/>
    <property type="evidence" value="ECO:0000314"/>
    <property type="project" value="UniProtKB"/>
</dbReference>
<dbReference type="GO" id="GO:0072738">
    <property type="term" value="P:cellular response to diamide"/>
    <property type="evidence" value="ECO:0000314"/>
    <property type="project" value="UniProtKB"/>
</dbReference>
<dbReference type="GO" id="GO:0071392">
    <property type="term" value="P:cellular response to estradiol stimulus"/>
    <property type="evidence" value="ECO:0007669"/>
    <property type="project" value="Ensembl"/>
</dbReference>
<dbReference type="GO" id="GO:0071480">
    <property type="term" value="P:cellular response to gamma radiation"/>
    <property type="evidence" value="ECO:0000314"/>
    <property type="project" value="UniProtKB"/>
</dbReference>
<dbReference type="GO" id="GO:0034605">
    <property type="term" value="P:cellular response to heat"/>
    <property type="evidence" value="ECO:0000314"/>
    <property type="project" value="UniProtKB"/>
</dbReference>
<dbReference type="GO" id="GO:0070301">
    <property type="term" value="P:cellular response to hydrogen peroxide"/>
    <property type="evidence" value="ECO:0007669"/>
    <property type="project" value="Ensembl"/>
</dbReference>
<dbReference type="GO" id="GO:1904845">
    <property type="term" value="P:cellular response to L-glutamine"/>
    <property type="evidence" value="ECO:0007669"/>
    <property type="project" value="Ensembl"/>
</dbReference>
<dbReference type="GO" id="GO:0071222">
    <property type="term" value="P:cellular response to lipopolysaccharide"/>
    <property type="evidence" value="ECO:0007669"/>
    <property type="project" value="Ensembl"/>
</dbReference>
<dbReference type="GO" id="GO:1904843">
    <property type="term" value="P:cellular response to nitroglycerin"/>
    <property type="evidence" value="ECO:0007669"/>
    <property type="project" value="Ensembl"/>
</dbReference>
<dbReference type="GO" id="GO:0035865">
    <property type="term" value="P:cellular response to potassium ion"/>
    <property type="evidence" value="ECO:0007669"/>
    <property type="project" value="Ensembl"/>
</dbReference>
<dbReference type="GO" id="GO:1903936">
    <property type="term" value="P:cellular response to sodium arsenite"/>
    <property type="evidence" value="ECO:0000314"/>
    <property type="project" value="UniProtKB"/>
</dbReference>
<dbReference type="GO" id="GO:0034620">
    <property type="term" value="P:cellular response to unfolded protein"/>
    <property type="evidence" value="ECO:0000314"/>
    <property type="project" value="UniProtKB"/>
</dbReference>
<dbReference type="GO" id="GO:0071466">
    <property type="term" value="P:cellular response to xenobiotic stimulus"/>
    <property type="evidence" value="ECO:0007669"/>
    <property type="project" value="Ensembl"/>
</dbReference>
<dbReference type="GO" id="GO:0006952">
    <property type="term" value="P:defense response"/>
    <property type="evidence" value="ECO:0007669"/>
    <property type="project" value="Ensembl"/>
</dbReference>
<dbReference type="GO" id="GO:0006281">
    <property type="term" value="P:DNA repair"/>
    <property type="evidence" value="ECO:0007669"/>
    <property type="project" value="UniProtKB-KW"/>
</dbReference>
<dbReference type="GO" id="GO:0001892">
    <property type="term" value="P:embryonic placenta development"/>
    <property type="evidence" value="ECO:0007669"/>
    <property type="project" value="Ensembl"/>
</dbReference>
<dbReference type="GO" id="GO:0060136">
    <property type="term" value="P:embryonic process involved in female pregnancy"/>
    <property type="evidence" value="ECO:0007669"/>
    <property type="project" value="Ensembl"/>
</dbReference>
<dbReference type="GO" id="GO:0050673">
    <property type="term" value="P:epithelial cell proliferation"/>
    <property type="evidence" value="ECO:0007669"/>
    <property type="project" value="Ensembl"/>
</dbReference>
<dbReference type="GO" id="GO:0007143">
    <property type="term" value="P:female meiotic nuclear division"/>
    <property type="evidence" value="ECO:0007669"/>
    <property type="project" value="Ensembl"/>
</dbReference>
<dbReference type="GO" id="GO:0000165">
    <property type="term" value="P:MAPK cascade"/>
    <property type="evidence" value="ECO:0000314"/>
    <property type="project" value="UniProtKB"/>
</dbReference>
<dbReference type="GO" id="GO:0006397">
    <property type="term" value="P:mRNA processing"/>
    <property type="evidence" value="ECO:0007669"/>
    <property type="project" value="UniProtKB-KW"/>
</dbReference>
<dbReference type="GO" id="GO:0051028">
    <property type="term" value="P:mRNA transport"/>
    <property type="evidence" value="ECO:0007669"/>
    <property type="project" value="UniProtKB-KW"/>
</dbReference>
<dbReference type="GO" id="GO:0010667">
    <property type="term" value="P:negative regulation of cardiac muscle cell apoptotic process"/>
    <property type="evidence" value="ECO:0007669"/>
    <property type="project" value="Ensembl"/>
</dbReference>
<dbReference type="GO" id="GO:2001033">
    <property type="term" value="P:negative regulation of double-strand break repair via nonhomologous end joining"/>
    <property type="evidence" value="ECO:0000315"/>
    <property type="project" value="UniProtKB"/>
</dbReference>
<dbReference type="GO" id="GO:0050680">
    <property type="term" value="P:negative regulation of epithelial cell proliferation"/>
    <property type="evidence" value="ECO:0007669"/>
    <property type="project" value="Ensembl"/>
</dbReference>
<dbReference type="GO" id="GO:0090084">
    <property type="term" value="P:negative regulation of inclusion body assembly"/>
    <property type="evidence" value="ECO:0007669"/>
    <property type="project" value="Ensembl"/>
</dbReference>
<dbReference type="GO" id="GO:0031333">
    <property type="term" value="P:negative regulation of protein-containing complex assembly"/>
    <property type="evidence" value="ECO:0000315"/>
    <property type="project" value="GO_Central"/>
</dbReference>
<dbReference type="GO" id="GO:0000122">
    <property type="term" value="P:negative regulation of transcription by RNA polymerase II"/>
    <property type="evidence" value="ECO:0000314"/>
    <property type="project" value="UniProtKB"/>
</dbReference>
<dbReference type="GO" id="GO:0032720">
    <property type="term" value="P:negative regulation of tumor necrosis factor production"/>
    <property type="evidence" value="ECO:0007669"/>
    <property type="project" value="Ensembl"/>
</dbReference>
<dbReference type="GO" id="GO:1902512">
    <property type="term" value="P:positive regulation of apoptotic DNA fragmentation"/>
    <property type="evidence" value="ECO:0007669"/>
    <property type="project" value="Ensembl"/>
</dbReference>
<dbReference type="GO" id="GO:2001235">
    <property type="term" value="P:positive regulation of apoptotic signaling pathway"/>
    <property type="evidence" value="ECO:0007669"/>
    <property type="project" value="Ensembl"/>
</dbReference>
<dbReference type="GO" id="GO:0120162">
    <property type="term" value="P:positive regulation of cold-induced thermogenesis"/>
    <property type="evidence" value="ECO:0000250"/>
    <property type="project" value="YuBioLab"/>
</dbReference>
<dbReference type="GO" id="GO:0010628">
    <property type="term" value="P:positive regulation of gene expression"/>
    <property type="evidence" value="ECO:0007669"/>
    <property type="project" value="Ensembl"/>
</dbReference>
<dbReference type="GO" id="GO:0090261">
    <property type="term" value="P:positive regulation of inclusion body assembly"/>
    <property type="evidence" value="ECO:0007669"/>
    <property type="project" value="Ensembl"/>
</dbReference>
<dbReference type="GO" id="GO:0045651">
    <property type="term" value="P:positive regulation of macrophage differentiation"/>
    <property type="evidence" value="ECO:0000315"/>
    <property type="project" value="ARUK-UCL"/>
</dbReference>
<dbReference type="GO" id="GO:0045931">
    <property type="term" value="P:positive regulation of mitotic cell cycle"/>
    <property type="evidence" value="ECO:0000315"/>
    <property type="project" value="UniProtKB"/>
</dbReference>
<dbReference type="GO" id="GO:0040018">
    <property type="term" value="P:positive regulation of multicellular organism growth"/>
    <property type="evidence" value="ECO:0007669"/>
    <property type="project" value="Ensembl"/>
</dbReference>
<dbReference type="GO" id="GO:0062029">
    <property type="term" value="P:positive regulation of stress granule assembly"/>
    <property type="evidence" value="ECO:0007669"/>
    <property type="project" value="Ensembl"/>
</dbReference>
<dbReference type="GO" id="GO:0045944">
    <property type="term" value="P:positive regulation of transcription by RNA polymerase II"/>
    <property type="evidence" value="ECO:0000314"/>
    <property type="project" value="UniProtKB"/>
</dbReference>
<dbReference type="GO" id="GO:0065003">
    <property type="term" value="P:protein-containing complex assembly"/>
    <property type="evidence" value="ECO:0000314"/>
    <property type="project" value="UniProtKB"/>
</dbReference>
<dbReference type="GO" id="GO:1900034">
    <property type="term" value="P:regulation of cellular response to heat"/>
    <property type="evidence" value="ECO:0000314"/>
    <property type="project" value="UniProtKB"/>
</dbReference>
<dbReference type="GO" id="GO:0006357">
    <property type="term" value="P:regulation of transcription by RNA polymerase II"/>
    <property type="evidence" value="ECO:0000314"/>
    <property type="project" value="UniProtKB"/>
</dbReference>
<dbReference type="GO" id="GO:0014823">
    <property type="term" value="P:response to activity"/>
    <property type="evidence" value="ECO:0007669"/>
    <property type="project" value="Ensembl"/>
</dbReference>
<dbReference type="GO" id="GO:1990910">
    <property type="term" value="P:response to hypobaric hypoxia"/>
    <property type="evidence" value="ECO:0007669"/>
    <property type="project" value="Ensembl"/>
</dbReference>
<dbReference type="GO" id="GO:0007584">
    <property type="term" value="P:response to nutrient"/>
    <property type="evidence" value="ECO:0007669"/>
    <property type="project" value="Ensembl"/>
</dbReference>
<dbReference type="GO" id="GO:1901652">
    <property type="term" value="P:response to peptide"/>
    <property type="evidence" value="ECO:0007669"/>
    <property type="project" value="Ensembl"/>
</dbReference>
<dbReference type="GO" id="GO:1990911">
    <property type="term" value="P:response to psychosocial stress"/>
    <property type="evidence" value="ECO:0007669"/>
    <property type="project" value="Ensembl"/>
</dbReference>
<dbReference type="GO" id="GO:0033574">
    <property type="term" value="P:response to testosterone"/>
    <property type="evidence" value="ECO:0007669"/>
    <property type="project" value="Ensembl"/>
</dbReference>
<dbReference type="GO" id="GO:0007283">
    <property type="term" value="P:spermatogenesis"/>
    <property type="evidence" value="ECO:0007669"/>
    <property type="project" value="Ensembl"/>
</dbReference>
<dbReference type="FunFam" id="1.10.10.10:FF:000027">
    <property type="entry name" value="Heat shock transcription factor 1"/>
    <property type="match status" value="1"/>
</dbReference>
<dbReference type="Gene3D" id="1.10.10.10">
    <property type="entry name" value="Winged helix-like DNA-binding domain superfamily/Winged helix DNA-binding domain"/>
    <property type="match status" value="1"/>
</dbReference>
<dbReference type="IDEAL" id="IID00461"/>
<dbReference type="InterPro" id="IPR000232">
    <property type="entry name" value="HSF_DNA-bd"/>
</dbReference>
<dbReference type="InterPro" id="IPR010542">
    <property type="entry name" value="Vert_HSTF_C"/>
</dbReference>
<dbReference type="InterPro" id="IPR036388">
    <property type="entry name" value="WH-like_DNA-bd_sf"/>
</dbReference>
<dbReference type="InterPro" id="IPR036390">
    <property type="entry name" value="WH_DNA-bd_sf"/>
</dbReference>
<dbReference type="PANTHER" id="PTHR10015:SF274">
    <property type="entry name" value="HEAT SHOCK FACTOR PROTEIN 1"/>
    <property type="match status" value="1"/>
</dbReference>
<dbReference type="PANTHER" id="PTHR10015">
    <property type="entry name" value="HEAT SHOCK TRANSCRIPTION FACTOR"/>
    <property type="match status" value="1"/>
</dbReference>
<dbReference type="Pfam" id="PF00447">
    <property type="entry name" value="HSF_DNA-bind"/>
    <property type="match status" value="1"/>
</dbReference>
<dbReference type="Pfam" id="PF06546">
    <property type="entry name" value="Vert_HS_TF"/>
    <property type="match status" value="1"/>
</dbReference>
<dbReference type="PRINTS" id="PR00056">
    <property type="entry name" value="HSFDOMAIN"/>
</dbReference>
<dbReference type="SMART" id="SM00415">
    <property type="entry name" value="HSF"/>
    <property type="match status" value="1"/>
</dbReference>
<dbReference type="SUPFAM" id="SSF46785">
    <property type="entry name" value="Winged helix' DNA-binding domain"/>
    <property type="match status" value="1"/>
</dbReference>
<dbReference type="PROSITE" id="PS00434">
    <property type="entry name" value="HSF_DOMAIN"/>
    <property type="match status" value="1"/>
</dbReference>
<reference key="1">
    <citation type="journal article" date="1991" name="Proc. Natl. Acad. Sci. U.S.A.">
        <title>Molecular cloning and expression of a human heat shock factor, HSF1.</title>
        <authorList>
            <person name="Rabindran S.K."/>
            <person name="Giorgi G."/>
            <person name="Clos J."/>
            <person name="Wu C."/>
        </authorList>
    </citation>
    <scope>NUCLEOTIDE SEQUENCE [MRNA]</scope>
    <scope>FUNCTION</scope>
    <scope>DNA-BINDING</scope>
</reference>
<reference key="2">
    <citation type="journal article" date="2004" name="Nat. Genet.">
        <title>Complete sequencing and characterization of 21,243 full-length human cDNAs.</title>
        <authorList>
            <person name="Ota T."/>
            <person name="Suzuki Y."/>
            <person name="Nishikawa T."/>
            <person name="Otsuki T."/>
            <person name="Sugiyama T."/>
            <person name="Irie R."/>
            <person name="Wakamatsu A."/>
            <person name="Hayashi K."/>
            <person name="Sato H."/>
            <person name="Nagai K."/>
            <person name="Kimura K."/>
            <person name="Makita H."/>
            <person name="Sekine M."/>
            <person name="Obayashi M."/>
            <person name="Nishi T."/>
            <person name="Shibahara T."/>
            <person name="Tanaka T."/>
            <person name="Ishii S."/>
            <person name="Yamamoto J."/>
            <person name="Saito K."/>
            <person name="Kawai Y."/>
            <person name="Isono Y."/>
            <person name="Nakamura Y."/>
            <person name="Nagahari K."/>
            <person name="Murakami K."/>
            <person name="Yasuda T."/>
            <person name="Iwayanagi T."/>
            <person name="Wagatsuma M."/>
            <person name="Shiratori A."/>
            <person name="Sudo H."/>
            <person name="Hosoiri T."/>
            <person name="Kaku Y."/>
            <person name="Kodaira H."/>
            <person name="Kondo H."/>
            <person name="Sugawara M."/>
            <person name="Takahashi M."/>
            <person name="Kanda K."/>
            <person name="Yokoi T."/>
            <person name="Furuya T."/>
            <person name="Kikkawa E."/>
            <person name="Omura Y."/>
            <person name="Abe K."/>
            <person name="Kamihara K."/>
            <person name="Katsuta N."/>
            <person name="Sato K."/>
            <person name="Tanikawa M."/>
            <person name="Yamazaki M."/>
            <person name="Ninomiya K."/>
            <person name="Ishibashi T."/>
            <person name="Yamashita H."/>
            <person name="Murakawa K."/>
            <person name="Fujimori K."/>
            <person name="Tanai H."/>
            <person name="Kimata M."/>
            <person name="Watanabe M."/>
            <person name="Hiraoka S."/>
            <person name="Chiba Y."/>
            <person name="Ishida S."/>
            <person name="Ono Y."/>
            <person name="Takiguchi S."/>
            <person name="Watanabe S."/>
            <person name="Yosida M."/>
            <person name="Hotuta T."/>
            <person name="Kusano J."/>
            <person name="Kanehori K."/>
            <person name="Takahashi-Fujii A."/>
            <person name="Hara H."/>
            <person name="Tanase T.-O."/>
            <person name="Nomura Y."/>
            <person name="Togiya S."/>
            <person name="Komai F."/>
            <person name="Hara R."/>
            <person name="Takeuchi K."/>
            <person name="Arita M."/>
            <person name="Imose N."/>
            <person name="Musashino K."/>
            <person name="Yuuki H."/>
            <person name="Oshima A."/>
            <person name="Sasaki N."/>
            <person name="Aotsuka S."/>
            <person name="Yoshikawa Y."/>
            <person name="Matsunawa H."/>
            <person name="Ichihara T."/>
            <person name="Shiohata N."/>
            <person name="Sano S."/>
            <person name="Moriya S."/>
            <person name="Momiyama H."/>
            <person name="Satoh N."/>
            <person name="Takami S."/>
            <person name="Terashima Y."/>
            <person name="Suzuki O."/>
            <person name="Nakagawa S."/>
            <person name="Senoh A."/>
            <person name="Mizoguchi H."/>
            <person name="Goto Y."/>
            <person name="Shimizu F."/>
            <person name="Wakebe H."/>
            <person name="Hishigaki H."/>
            <person name="Watanabe T."/>
            <person name="Sugiyama A."/>
            <person name="Takemoto M."/>
            <person name="Kawakami B."/>
            <person name="Yamazaki M."/>
            <person name="Watanabe K."/>
            <person name="Kumagai A."/>
            <person name="Itakura S."/>
            <person name="Fukuzumi Y."/>
            <person name="Fujimori Y."/>
            <person name="Komiyama M."/>
            <person name="Tashiro H."/>
            <person name="Tanigami A."/>
            <person name="Fujiwara T."/>
            <person name="Ono T."/>
            <person name="Yamada K."/>
            <person name="Fujii Y."/>
            <person name="Ozaki K."/>
            <person name="Hirao M."/>
            <person name="Ohmori Y."/>
            <person name="Kawabata A."/>
            <person name="Hikiji T."/>
            <person name="Kobatake N."/>
            <person name="Inagaki H."/>
            <person name="Ikema Y."/>
            <person name="Okamoto S."/>
            <person name="Okitani R."/>
            <person name="Kawakami T."/>
            <person name="Noguchi S."/>
            <person name="Itoh T."/>
            <person name="Shigeta K."/>
            <person name="Senba T."/>
            <person name="Matsumura K."/>
            <person name="Nakajima Y."/>
            <person name="Mizuno T."/>
            <person name="Morinaga M."/>
            <person name="Sasaki M."/>
            <person name="Togashi T."/>
            <person name="Oyama M."/>
            <person name="Hata H."/>
            <person name="Watanabe M."/>
            <person name="Komatsu T."/>
            <person name="Mizushima-Sugano J."/>
            <person name="Satoh T."/>
            <person name="Shirai Y."/>
            <person name="Takahashi Y."/>
            <person name="Nakagawa K."/>
            <person name="Okumura K."/>
            <person name="Nagase T."/>
            <person name="Nomura N."/>
            <person name="Kikuchi H."/>
            <person name="Masuho Y."/>
            <person name="Yamashita R."/>
            <person name="Nakai K."/>
            <person name="Yada T."/>
            <person name="Nakamura Y."/>
            <person name="Ohara O."/>
            <person name="Isogai T."/>
            <person name="Sugano S."/>
        </authorList>
    </citation>
    <scope>NUCLEOTIDE SEQUENCE [LARGE SCALE MRNA] (ISOFORM LONG)</scope>
</reference>
<reference key="3">
    <citation type="submission" date="2003-05" db="EMBL/GenBank/DDBJ databases">
        <title>Cloning of human full-length CDSs in BD Creator(TM) system donor vector.</title>
        <authorList>
            <person name="Kalnine N."/>
            <person name="Chen X."/>
            <person name="Rolfs A."/>
            <person name="Halleck A."/>
            <person name="Hines L."/>
            <person name="Eisenstein S."/>
            <person name="Koundinya M."/>
            <person name="Raphael J."/>
            <person name="Moreira D."/>
            <person name="Kelley T."/>
            <person name="LaBaer J."/>
            <person name="Lin Y."/>
            <person name="Phelan M."/>
            <person name="Farmer A."/>
        </authorList>
    </citation>
    <scope>NUCLEOTIDE SEQUENCE [LARGE SCALE MRNA] (ISOFORM LONG)</scope>
</reference>
<reference key="4">
    <citation type="journal article" date="2006" name="Nature">
        <title>DNA sequence and analysis of human chromosome 8.</title>
        <authorList>
            <person name="Nusbaum C."/>
            <person name="Mikkelsen T.S."/>
            <person name="Zody M.C."/>
            <person name="Asakawa S."/>
            <person name="Taudien S."/>
            <person name="Garber M."/>
            <person name="Kodira C.D."/>
            <person name="Schueler M.G."/>
            <person name="Shimizu A."/>
            <person name="Whittaker C.A."/>
            <person name="Chang J.L."/>
            <person name="Cuomo C.A."/>
            <person name="Dewar K."/>
            <person name="FitzGerald M.G."/>
            <person name="Yang X."/>
            <person name="Allen N.R."/>
            <person name="Anderson S."/>
            <person name="Asakawa T."/>
            <person name="Blechschmidt K."/>
            <person name="Bloom T."/>
            <person name="Borowsky M.L."/>
            <person name="Butler J."/>
            <person name="Cook A."/>
            <person name="Corum B."/>
            <person name="DeArellano K."/>
            <person name="DeCaprio D."/>
            <person name="Dooley K.T."/>
            <person name="Dorris L. III"/>
            <person name="Engels R."/>
            <person name="Gloeckner G."/>
            <person name="Hafez N."/>
            <person name="Hagopian D.S."/>
            <person name="Hall J.L."/>
            <person name="Ishikawa S.K."/>
            <person name="Jaffe D.B."/>
            <person name="Kamat A."/>
            <person name="Kudoh J."/>
            <person name="Lehmann R."/>
            <person name="Lokitsang T."/>
            <person name="Macdonald P."/>
            <person name="Major J.E."/>
            <person name="Matthews C.D."/>
            <person name="Mauceli E."/>
            <person name="Menzel U."/>
            <person name="Mihalev A.H."/>
            <person name="Minoshima S."/>
            <person name="Murayama Y."/>
            <person name="Naylor J.W."/>
            <person name="Nicol R."/>
            <person name="Nguyen C."/>
            <person name="O'Leary S.B."/>
            <person name="O'Neill K."/>
            <person name="Parker S.C.J."/>
            <person name="Polley A."/>
            <person name="Raymond C.K."/>
            <person name="Reichwald K."/>
            <person name="Rodriguez J."/>
            <person name="Sasaki T."/>
            <person name="Schilhabel M."/>
            <person name="Siddiqui R."/>
            <person name="Smith C.L."/>
            <person name="Sneddon T.P."/>
            <person name="Talamas J.A."/>
            <person name="Tenzin P."/>
            <person name="Topham K."/>
            <person name="Venkataraman V."/>
            <person name="Wen G."/>
            <person name="Yamazaki S."/>
            <person name="Young S.K."/>
            <person name="Zeng Q."/>
            <person name="Zimmer A.R."/>
            <person name="Rosenthal A."/>
            <person name="Birren B.W."/>
            <person name="Platzer M."/>
            <person name="Shimizu N."/>
            <person name="Lander E.S."/>
        </authorList>
    </citation>
    <scope>NUCLEOTIDE SEQUENCE [LARGE SCALE GENOMIC DNA]</scope>
</reference>
<reference key="5">
    <citation type="journal article" date="2004" name="Genome Res.">
        <title>The status, quality, and expansion of the NIH full-length cDNA project: the Mammalian Gene Collection (MGC).</title>
        <authorList>
            <consortium name="The MGC Project Team"/>
        </authorList>
    </citation>
    <scope>NUCLEOTIDE SEQUENCE [LARGE SCALE MRNA] (ISOFORM LONG)</scope>
    <source>
        <tissue>Muscle</tissue>
    </source>
</reference>
<reference key="6">
    <citation type="journal article" date="1991" name="Proc. Natl. Acad. Sci. U.S.A.">
        <title>Isolation of a cDNA for HSF2: evidence for two heat shock factor genes in humans.</title>
        <authorList>
            <person name="Schuetz T.J."/>
            <person name="Gallo G.J."/>
            <person name="Sheldon L."/>
            <person name="Tempst P."/>
            <person name="Kingston R.E."/>
        </authorList>
    </citation>
    <scope>PROTEIN SEQUENCE OF 73-79; 81-93; 97-106; 163-170 AND 337-352</scope>
</reference>
<reference key="7">
    <citation type="journal article" date="2001" name="EMBO J.">
        <title>Phosphorylation of serine 230 promotes inducible transcriptional activity of heat shock factor 1.</title>
        <authorList>
            <person name="Holmberg C.I."/>
            <person name="Hietakangas V."/>
            <person name="Mikhailov A."/>
            <person name="Rantanen J.O."/>
            <person name="Kallio M."/>
            <person name="Meinander A."/>
            <person name="Hellman J."/>
            <person name="Morrice N."/>
            <person name="MacKintosh C."/>
            <person name="Morimoto R.I."/>
            <person name="Eriksson J.E."/>
            <person name="Sistonen L."/>
        </authorList>
    </citation>
    <scope>PROTEIN SEQUENCE OF 228-241 AND 297-310</scope>
    <scope>PHOSPHORYLATION AT SER-230 BY CAMK2</scope>
    <scope>PHOSPHORYLATION AT SER-303 AND SER-307</scope>
    <scope>FUNCTION</scope>
    <scope>SUBCELLULAR LOCATION</scope>
    <scope>MUTAGENESIS OF SER-230</scope>
    <scope>DOMAIN</scope>
    <scope>IDENTIFICATION BY MASS SPECTROMETRY</scope>
</reference>
<reference key="8">
    <citation type="journal article" date="1991" name="Mol. Cell. Biol.">
        <title>Heat shock-induced interactions of heat shock transcription factor and the human hsp70 promoter examined by in vivo footprinting.</title>
        <authorList>
            <person name="Abravaya K."/>
            <person name="Phillips B."/>
            <person name="Morimoto R.I."/>
        </authorList>
    </citation>
    <scope>FUNCTION</scope>
    <scope>DNA-BINDING</scope>
</reference>
<reference key="9">
    <citation type="journal article" date="1993" name="Mol. Cell. Biol.">
        <title>Activation of human heat shock genes is accompanied by oligomerization, modification, and rapid translocation of heat shock transcription factor HSF1.</title>
        <authorList>
            <person name="Baler R."/>
            <person name="Dahl G."/>
            <person name="Voellmy R."/>
        </authorList>
    </citation>
    <scope>FUNCTION</scope>
    <scope>DNA-BINDING</scope>
    <scope>SUBUNIT</scope>
    <scope>SUBCELLULAR LOCATION</scope>
</reference>
<reference key="10">
    <citation type="journal article" date="1994" name="Mol. Cell. Biol.">
        <title>Interaction between heat shock factor and hsp70 is insufficient to suppress induction of DNA-binding activity in vivo.</title>
        <authorList>
            <person name="Rabindran S.K."/>
            <person name="Wisniewski J."/>
            <person name="Li L."/>
            <person name="Li G.C."/>
            <person name="Wu C."/>
        </authorList>
    </citation>
    <scope>SUBUNIT</scope>
    <scope>INTERACTION WITH HSPA1A</scope>
</reference>
<reference key="11">
    <citation type="journal article" date="1994" name="Mol. Cell. Biol.">
        <title>Activation of the DNA-binding ability of human heat shock transcription factor 1 may involve the transition from an intramolecular to an intermolecular triple-stranded coiled-coil structure.</title>
        <authorList>
            <person name="Zuo J."/>
            <person name="Baler R."/>
            <person name="Dahl G."/>
            <person name="Voellmy R."/>
        </authorList>
    </citation>
    <scope>FUNCTION</scope>
    <scope>DNA-BINDING</scope>
    <scope>SUBUNIT</scope>
    <scope>DOMAIN</scope>
    <scope>MUTAGENESIS OF LEU-140; MET-147; LEU-189; LEU-193; MET-391 AND LEU-395</scope>
</reference>
<reference key="12">
    <citation type="journal article" date="1995" name="Mol. Cell. Biol.">
        <title>A heat shock-responsive domain of human HSF1 that regulates transcription activation domain function.</title>
        <authorList>
            <person name="Green M."/>
            <person name="Schuetz T.J."/>
            <person name="Sullivan E.K."/>
            <person name="Kingston R.E."/>
        </authorList>
    </citation>
    <scope>FUNCTION</scope>
    <scope>DOMAIN</scope>
</reference>
<reference key="13">
    <citation type="journal article" date="1995" name="Mol. Cell. Biol.">
        <title>Multiple layers of regulation of human heat shock transcription factor 1.</title>
        <authorList>
            <person name="Zuo J."/>
            <person name="Rungger D."/>
            <person name="Voellmy R."/>
        </authorList>
    </citation>
    <scope>FUNCTION</scope>
    <scope>SUBUNIT</scope>
    <scope>DNA-BINDING</scope>
    <scope>SUBCELLULAR LOCATION</scope>
    <scope>DOMAIN</scope>
    <scope>MUTAGENESIS OF LEU-140; MET-147; LEU-189 AND MET-391</scope>
</reference>
<reference key="14">
    <citation type="journal article" date="1996" name="Cell Stress Chaperones">
        <title>Evidence for a role of Hsp70 in the regulation of the heat shock response in mammalian cells.</title>
        <authorList>
            <person name="Baler R."/>
            <person name="Zou J."/>
            <person name="Voellmy R."/>
        </authorList>
    </citation>
    <scope>SUBUNIT</scope>
    <scope>INTERACTION WITH HSPA1A</scope>
</reference>
<reference key="15">
    <citation type="journal article" date="1996" name="Genes Dev.">
        <title>Repression of human heat shock factor 1 activity at control temperature by phosphorylation.</title>
        <authorList>
            <person name="Knauf U."/>
            <person name="Newton E.M."/>
            <person name="Kyriakis J."/>
            <person name="Kingston R.E."/>
        </authorList>
    </citation>
    <scope>PHOSPHORYLATION AT SER-303 AND SER-307</scope>
    <scope>FUNCTION</scope>
    <scope>DOMAIN</scope>
    <scope>MUTAGENESIS OF ARG-296; VAL-297; LYS-298; GLU-299; GLU-300; SER-303; SER-307; ARG-309 AND GLU-311</scope>
    <scope>IDENTIFICATION BY MASS SPECTROMETRY</scope>
</reference>
<reference key="16">
    <citation type="journal article" date="1996" name="J. Biol. Chem.">
        <title>Sequential phosphorylation by mitogen-activated protein kinase and glycogen synthase kinase 3 represses transcriptional activation by heat shock factor-1.</title>
        <authorList>
            <person name="Chu B."/>
            <person name="Soncin F."/>
            <person name="Price B.D."/>
            <person name="Stevenson M.A."/>
            <person name="Calderwood S.K."/>
        </authorList>
    </citation>
    <scope>PHOSPHORYLATION AT SER-275; SER-303 BY GSK3B AND SER-307 BY MAPK3</scope>
    <scope>FUNCTION</scope>
    <scope>DNA-BINDING</scope>
    <scope>IDENTIFICATION BY MASS SPECTROMETRY</scope>
    <scope>MUTAGENESIS OF SER-275; SER-303 AND SER-307</scope>
</reference>
<reference key="17">
    <citation type="journal article" date="1997" name="J. Biol. Chem.">
        <title>Heat shock factor 1 represses Ras-induced transcriptional activation of the c-fos gene.</title>
        <authorList>
            <person name="Chen C."/>
            <person name="Xie Y."/>
            <person name="Stevenson M.A."/>
            <person name="Auron P.E."/>
            <person name="Calderwood S.K."/>
        </authorList>
    </citation>
    <scope>FUNCTION</scope>
    <scope>MUTAGENESIS OF LEU-22</scope>
</reference>
<reference key="18">
    <citation type="journal article" date="1997" name="Mol. Cell. Biol.">
        <title>Repression of the heat shock factor 1 transcriptional activation domain is modulated by constitutive phosphorylation.</title>
        <authorList>
            <person name="Kline M.P."/>
            <person name="Morimoto R.I."/>
        </authorList>
    </citation>
    <scope>PHOSPHORYLATION AT SER-303 AND SER-307</scope>
    <scope>FUNCTION</scope>
    <scope>DOMAIN</scope>
    <scope>MUTAGENESIS OF SER-303 AND SER-307</scope>
    <scope>IDENTIFICATION BY MASS SPECTROMETRY</scope>
</reference>
<reference key="19">
    <citation type="journal article" date="1998" name="Cell">
        <title>Repression of heat shock transcription factor HSF1 activation by HSP90 (HSP90 complex) that forms a stress-sensitive complex with HSF1.</title>
        <authorList>
            <person name="Zou J."/>
            <person name="Guo Y."/>
            <person name="Guettouche T."/>
            <person name="Smith D.F."/>
            <person name="Voellmy R."/>
        </authorList>
    </citation>
    <scope>FUNCTION</scope>
    <scope>SUBUNIT</scope>
    <scope>INTERACTION WITH HSP90 PROTEINS</scope>
</reference>
<reference key="20">
    <citation type="journal article" date="1998" name="Genes Dev.">
        <title>Molecular chaperones as HSF1-specific transcriptional repressors.</title>
        <authorList>
            <person name="Shi Y."/>
            <person name="Mosser D.D."/>
            <person name="Morimoto R.I."/>
        </authorList>
    </citation>
    <scope>INTERACTION WITH DNAJB1; HSPA1A AND HSPA8</scope>
    <scope>FUNCTION</scope>
    <scope>DNA-BINDING</scope>
    <scope>PHOSPHORYLATION</scope>
</reference>
<reference key="21">
    <citation type="journal article" date="1998" name="J. Biol. Chem.">
        <title>Transcriptional activation of heat shock factor HSF1 probed by phosphopeptide analysis of factor 32P-labeled in vivo.</title>
        <authorList>
            <person name="Xia W."/>
            <person name="Guo Y."/>
            <person name="Vilaboa N."/>
            <person name="Zuo J."/>
            <person name="Voellmy R."/>
        </authorList>
    </citation>
    <scope>PHOSPHORYLATION AT SER-307</scope>
    <scope>FUNCTION</scope>
    <scope>MUTAGENESIS OF SER-275; SER-303 AND SER-307</scope>
    <scope>IDENTIFICATION BY MASS SPECTROMETRY</scope>
</reference>
<reference key="22">
    <citation type="journal article" date="1999" name="J. Cell Sci.">
        <title>Human heat shock factor 1 is predominantly a nuclear protein before and after heat stress.</title>
        <authorList>
            <person name="Mercier P.A."/>
            <person name="Winegarden N.A."/>
            <person name="Westwood J.T."/>
        </authorList>
    </citation>
    <scope>SUBCELLULAR LOCATION</scope>
</reference>
<reference key="23">
    <citation type="journal article" date="1999" name="Proc. Natl. Acad. Sci. U.S.A.">
        <title>Rapid and reversible relocalization of heat shock factor 1 within seconds to nuclear stress granules.</title>
        <authorList>
            <person name="Jolly C."/>
            <person name="Usson Y."/>
            <person name="Morimoto R.I."/>
        </authorList>
    </citation>
    <scope>FUNCTION</scope>
    <scope>SUBCELLULAR LOCATION</scope>
    <scope>PHOSPHORYLATION</scope>
    <scope>DNA-BINDING</scope>
</reference>
<reference key="24">
    <citation type="journal article" date="2000" name="Cell Stress Chaperones">
        <title>Potential targets for HSF1 within the preinitiation complex.</title>
        <authorList>
            <person name="Yuan C.X."/>
            <person name="Gurley W.B."/>
        </authorList>
    </citation>
    <scope>INTERACTION WITH GTF2A2; GTF2B AND TBP</scope>
</reference>
<reference key="25">
    <citation type="journal article" date="2000" name="J. Biol. Chem.">
        <title>c-Jun NH2-terminal kinase targeting and phosphorylation of heat shock factor-1 suppress its transcriptional activity.</title>
        <authorList>
            <person name="Dai R."/>
            <person name="Frejtag W."/>
            <person name="He B."/>
            <person name="Zhang Y."/>
            <person name="Mivechi N.F."/>
        </authorList>
    </citation>
    <scope>INTERACTION WITH MAPK3 AND MAPK8</scope>
    <scope>PHOSPHORYLATION AT SER-363 BY MAPK8</scope>
    <scope>SUBCELLULAR LOCATION</scope>
    <scope>DOMAIN</scope>
    <scope>MUTAGENESIS OF SER-363</scope>
    <scope>IDENTIFICATION BY MASS SPECTROMETRY</scope>
</reference>
<reference key="26">
    <citation type="journal article" date="2001" name="J. Biol. Chem.">
        <title>Regulation of heat shock transcription factor 1 by stress-induced SUMO-1 modification.</title>
        <authorList>
            <person name="Hong Y."/>
            <person name="Rogers R."/>
            <person name="Matunis M.J."/>
            <person name="Mayhew C.N."/>
            <person name="Goodson M.L."/>
            <person name="Park-Sarge O.K."/>
            <person name="Sarge K.D."/>
        </authorList>
    </citation>
    <scope>SUMOYLATION AT LYS-298</scope>
    <scope>MUTAGENESIS OF LYS-298</scope>
    <scope>SUBCELLULAR LOCATION</scope>
</reference>
<reference key="27">
    <citation type="journal article" date="2001" name="J. Biol. Chem.">
        <title>Evidence for a mechanism of repression of heat shock factor 1 transcriptional activity by a multichaperone complex.</title>
        <authorList>
            <person name="Guo Y."/>
            <person name="Guettouche T."/>
            <person name="Fenna M."/>
            <person name="Boellmann F."/>
            <person name="Pratt W.B."/>
            <person name="Toft D.O."/>
            <person name="Smith D.F."/>
            <person name="Voellmy R."/>
        </authorList>
    </citation>
    <scope>COMPONENT OF A CHAPERONE COMPLEX</scope>
    <scope>INTERACTION WITH FKBP4 AND HSP90 PROTEINS</scope>
    <scope>SUBUNIT</scope>
    <scope>PHOSPHORYLATION</scope>
    <scope>FUNCTION</scope>
    <scope>DNA-BINDING</scope>
</reference>
<reference key="28">
    <citation type="journal article" date="2003" name="Biochem. Biophys. Res. Commun.">
        <title>Insights into the regulation of heat shock transcription factor 1 SUMO-1 modification.</title>
        <authorList>
            <person name="Hilgarth R.S."/>
            <person name="Hong Y."/>
            <person name="Park-Sarge O.K."/>
            <person name="Sarge K.D."/>
        </authorList>
    </citation>
    <scope>PHOSPHORYLATION AT SER-307</scope>
    <scope>SUMOYLATION</scope>
    <scope>MUTAGENESIS OF LYS-298; SER-303 AND SER-307</scope>
</reference>
<reference key="29">
    <citation type="journal article" date="2003" name="Biochem. Biophys. Res. Commun.">
        <title>Transcriptional activity and DNA binding of heat shock factor-1 involve phosphorylation on threonine 142 by CK2.</title>
        <authorList>
            <person name="Soncin F."/>
            <person name="Zhang X."/>
            <person name="Chu B."/>
            <person name="Wang X."/>
            <person name="Asea A."/>
            <person name="Ann Stevenson M."/>
            <person name="Sacks D.B."/>
            <person name="Calderwood S.K."/>
        </authorList>
    </citation>
    <scope>PHOSPHORYLATION AT THR-142 BY CK2</scope>
    <scope>FUNCTION</scope>
    <scope>MUTAGENESIS OF THR-142</scope>
    <scope>IDENTIFICATION BY MASS SPECTROMETRY</scope>
</reference>
<reference key="30">
    <citation type="journal article" date="2003" name="Mol. Cell. Biol.">
        <title>Phosphorylation of serine 303 is a prerequisite for the stress-inducible SUMO modification of heat shock factor 1.</title>
        <authorList>
            <person name="Hietakangas V."/>
            <person name="Ahlskog J.K."/>
            <person name="Jakobsson A.M."/>
            <person name="Hellesuo M."/>
            <person name="Sahlberg N.M."/>
            <person name="Holmberg C.I."/>
            <person name="Mikhailov A."/>
            <person name="Palvimo J.J."/>
            <person name="Pirkkala L."/>
            <person name="Sistonen L."/>
        </authorList>
    </citation>
    <scope>SUMOYLATION AT LYS-298</scope>
    <scope>PHOSPHORYLATION AT SER-303</scope>
    <scope>SUBCELLULAR LOCATION</scope>
    <scope>MUTAGENESIS OF LYS-91; LYS-126; LYS-150; LYS-162; SER-230; LYS-298; SER-303; SER-307; SER-363 AND LYS-381</scope>
    <scope>IDENTIFICATION BY MASS SPECTROMETRY</scope>
</reference>
<reference key="31">
    <citation type="journal article" date="2003" name="Mol. Cell. Biol.">
        <title>Regulation of molecular chaperone gene transcription involves the serine phosphorylation, 14-3-3 epsilon binding, and cytoplasmic sequestration of heat shock factor 1.</title>
        <authorList>
            <person name="Wang X."/>
            <person name="Grammatikakis N."/>
            <person name="Siganou A."/>
            <person name="Calderwood S.K."/>
        </authorList>
    </citation>
    <scope>FUNCTION</scope>
    <scope>DNA-BINDING</scope>
    <scope>INTERACTION WITH YWHAE</scope>
    <scope>PHOSPHORYLATION</scope>
    <scope>SUBCELLULAR LOCATION</scope>
    <scope>MUTAGENESIS OF SER-303 AND SER-307</scope>
</reference>
<reference key="32">
    <citation type="journal article" date="2004" name="J. Biol. Chem.">
        <title>HSF1 modulation of Hsp70 mRNA polyadenylation via interaction with symplekin.</title>
        <authorList>
            <person name="Xing H."/>
            <person name="Mayhew C.N."/>
            <person name="Cullen K.E."/>
            <person name="Park-Sarge O.-K."/>
            <person name="Sarge K.D."/>
        </authorList>
    </citation>
    <scope>FUNCTION</scope>
    <scope>INTERACTION WITH SYMPK AND CSTF2</scope>
    <scope>SUBCELLULAR LOCATION</scope>
    <scope>MUTAGENESIS OF LEU-22</scope>
</reference>
<reference key="33">
    <citation type="journal article" date="2004" name="Proc. Natl. Acad. Sci. U.S.A.">
        <title>DAXX interacts with heat shock factor 1 during stress activation and enhances its transcriptional activity.</title>
        <authorList>
            <person name="Boellmann F."/>
            <person name="Guettouche T."/>
            <person name="Guo Y."/>
            <person name="Fenna M."/>
            <person name="Mnayer L."/>
            <person name="Voellmy R."/>
        </authorList>
    </citation>
    <scope>FUNCTION</scope>
    <scope>INTERACTION WITH DAXX</scope>
    <scope>IDENTIFICATION IN A RIBONUCLEOPROTEIN COMPLEX</scope>
    <scope>MUTAGENESIS OF LYS-298 AND SER-326</scope>
</reference>
<reference key="34">
    <citation type="journal article" date="2005" name="BMC Biochem.">
        <title>Analysis of phosphorylation of human heat shock factor 1 in cells experiencing a stress.</title>
        <authorList>
            <person name="Guettouche T."/>
            <person name="Boellmann F."/>
            <person name="Lane W.S."/>
            <person name="Voellmy R."/>
        </authorList>
    </citation>
    <scope>PHOSPHORYLATION AT SER-121; SER-230; SER-292; SER-303; SER-307; SER-314; SER-319; SER-326; SER-344; SER-363; SER-419 AND SER-444</scope>
    <scope>MUTAGENESIS OF SER-326</scope>
    <scope>IDENTIFICATION BY MASS SPECTROMETRY</scope>
</reference>
<reference key="35">
    <citation type="journal article" date="2005" name="J. Biol. Chem.">
        <title>Polo-like kinase 1 phosphorylates heat shock transcription factor 1 and mediates its nuclear translocation during heat stress.</title>
        <authorList>
            <person name="Kim S.A."/>
            <person name="Yoon J.H."/>
            <person name="Lee S.H."/>
            <person name="Ahn S.G."/>
        </authorList>
    </citation>
    <scope>INTERACTION WITH PLK1 AND HSP90 PROTEINS</scope>
    <scope>PHOSPHORYLATION AT SER-419 BY PLK1</scope>
    <scope>SUBCELLULAR LOCATION</scope>
    <scope>MUTAGENESIS OF SER-292; SER-314; SER-319; SER-326 AND SER-419</scope>
</reference>
<reference key="36">
    <citation type="journal article" date="2006" name="Cell">
        <title>Global, in vivo, and site-specific phosphorylation dynamics in signaling networks.</title>
        <authorList>
            <person name="Olsen J.V."/>
            <person name="Blagoev B."/>
            <person name="Gnad F."/>
            <person name="Macek B."/>
            <person name="Kumar C."/>
            <person name="Mortensen P."/>
            <person name="Mann M."/>
        </authorList>
    </citation>
    <scope>PHOSPHORYLATION [LARGE SCALE ANALYSIS] AT THR-323</scope>
    <scope>IDENTIFICATION BY MASS SPECTROMETRY [LARGE SCALE ANALYSIS]</scope>
    <source>
        <tissue>Cervix carcinoma</tissue>
    </source>
</reference>
<reference key="37">
    <citation type="journal article" date="2006" name="J. Biol. Chem.">
        <title>Phosphorylation of HSF1 by MAPK-activated protein kinase 2 on serine 121, inhibits transcriptional activity and promotes HSP90 binding.</title>
        <authorList>
            <person name="Wang X."/>
            <person name="Khaleque M.A."/>
            <person name="Zhao M.J."/>
            <person name="Zhong R."/>
            <person name="Gaestel M."/>
            <person name="Calderwood S.K."/>
        </authorList>
    </citation>
    <scope>PHOSPHORYLATION AT SER-121 BY MAPKAPK2</scope>
    <scope>FUNCTION</scope>
    <scope>INTERACTION WITH HSP90 PROTEINS AND MAPKAPK2</scope>
    <scope>MUTAGENESIS OF THR-120; SER-121; SER-123; THR-124; THR-527 AND SER-529</scope>
    <scope>IDENTIFICATION BY MASS SPECTROMETRY</scope>
</reference>
<reference key="38">
    <citation type="journal article" date="2006" name="Proc. Natl. Acad. Sci. U.S.A.">
        <title>PDSM, a motif for phosphorylation-dependent SUMO modification.</title>
        <authorList>
            <person name="Hietakangas V."/>
            <person name="Anckar J."/>
            <person name="Blomster H.A."/>
            <person name="Fujimoto M."/>
            <person name="Palvimo J.J."/>
            <person name="Nakai A."/>
            <person name="Sistonen L."/>
        </authorList>
    </citation>
    <scope>SUMOYLATION AT LYS-298</scope>
    <scope>PHOSPHORYLATION AT SER-303</scope>
</reference>
<reference key="39">
    <citation type="journal article" date="2006" name="Nature">
        <title>RNA-mediated response to heat shock in mammalian cells.</title>
        <authorList>
            <person name="Shamovsky I."/>
            <person name="Ivannikov M."/>
            <person name="Kandel E.S."/>
            <person name="Gershon D."/>
            <person name="Nudler E."/>
        </authorList>
    </citation>
    <scope>INTERACTION WITH EEF1A PROTEINS</scope>
    <scope>IDENTIFICATION IN A RIBONUCLEOPROTEIN COMPLEX</scope>
</reference>
<reference key="40">
    <citation type="journal article" date="2007" name="Genomics">
        <title>Nine-amino-acid transactivation domain: establishment and prediction utilities.</title>
        <authorList>
            <person name="Piskacek S."/>
            <person name="Gregor M."/>
            <person name="Nemethova M."/>
            <person name="Grabner M."/>
            <person name="Kovarik P."/>
            <person name="Piskacek M."/>
        </authorList>
    </citation>
    <scope>DOMAIN</scope>
</reference>
<reference key="41">
    <citation type="journal article" date="2007" name="J. Biol. Chem.">
        <title>HSF1-TPR interaction facilitates export of stress-induced HSP70 mRNA.</title>
        <authorList>
            <person name="Skaggs H.S."/>
            <person name="Xing H."/>
            <person name="Wilkerson D.C."/>
            <person name="Murphy L.A."/>
            <person name="Hong Y."/>
            <person name="Mayhew C.N."/>
            <person name="Sarge K.D."/>
        </authorList>
    </citation>
    <scope>FUNCTION IN STRESS-INDUCED NUCLEAR MRNA EXPORT</scope>
    <scope>INTERACTION WITH TPR</scope>
</reference>
<reference key="42">
    <citation type="journal article" date="2008" name="Cancer Res.">
        <title>HSF1 as a mitotic regulator: phosphorylation of HSF1 by Plk1 is essential for mitotic progression.</title>
        <authorList>
            <person name="Lee Y.J."/>
            <person name="Kim E.H."/>
            <person name="Lee J.S."/>
            <person name="Jeoung D."/>
            <person name="Bae S."/>
            <person name="Kwon S.H."/>
            <person name="Lee Y.S."/>
        </authorList>
    </citation>
    <scope>FUNCTION IN MITOTIC PROGRESSION REGULATION</scope>
    <scope>INTERACTION WITH BTRC; CDC20; MAD2L1 AND PLK1</scope>
    <scope>PHOSPHORYLATION AT SER-216 BY PLK1</scope>
    <scope>SUBCELLULAR LOCATION</scope>
    <scope>UBIQUITINATION</scope>
    <scope>PROTEASOMAL DEGRADATION</scope>
    <scope>MUTAGENESIS OF SER-216; SER-230; SER-303; SER-307 AND SER-419</scope>
</reference>
<reference key="43">
    <citation type="journal article" date="2008" name="EMBO Rep.">
        <title>A transcription cofactor required for the heat-shock response.</title>
        <authorList>
            <person name="Xu D."/>
            <person name="Zalmas L.P."/>
            <person name="La Thangue N.B."/>
        </authorList>
    </citation>
    <scope>FUNCTION</scope>
    <scope>INTERACTION WITH TTC5 AND EP300</scope>
</reference>
<reference key="44">
    <citation type="journal article" date="2008" name="J. Proteome Res.">
        <title>Combining protein-based IMAC, peptide-based IMAC, and MudPIT for efficient phosphoproteomic analysis.</title>
        <authorList>
            <person name="Cantin G.T."/>
            <person name="Yi W."/>
            <person name="Lu B."/>
            <person name="Park S.K."/>
            <person name="Xu T."/>
            <person name="Lee J.-D."/>
            <person name="Yates J.R. III"/>
        </authorList>
    </citation>
    <scope>PHOSPHORYLATION [LARGE SCALE ANALYSIS] AT SER-314</scope>
    <scope>IDENTIFICATION BY MASS SPECTROMETRY [LARGE SCALE ANALYSIS]</scope>
    <source>
        <tissue>Cervix carcinoma</tissue>
    </source>
</reference>
<reference key="45">
    <citation type="journal article" date="2008" name="Proc. Natl. Acad. Sci. U.S.A.">
        <title>A quantitative atlas of mitotic phosphorylation.</title>
        <authorList>
            <person name="Dephoure N."/>
            <person name="Zhou C."/>
            <person name="Villen J."/>
            <person name="Beausoleil S.A."/>
            <person name="Bakalarski C.E."/>
            <person name="Elledge S.J."/>
            <person name="Gygi S.P."/>
        </authorList>
    </citation>
    <scope>PHOSPHORYLATION [LARGE SCALE ANALYSIS] AT SER-363</scope>
    <scope>IDENTIFICATION BY MASS SPECTROMETRY [LARGE SCALE ANALYSIS]</scope>
    <source>
        <tissue>Cervix carcinoma</tissue>
    </source>
</reference>
<reference key="46">
    <citation type="journal article" date="2009" name="Anal. Chem.">
        <title>Lys-N and trypsin cover complementary parts of the phosphoproteome in a refined SCX-based approach.</title>
        <authorList>
            <person name="Gauci S."/>
            <person name="Helbig A.O."/>
            <person name="Slijper M."/>
            <person name="Krijgsveld J."/>
            <person name="Heck A.J."/>
            <person name="Mohammed S."/>
        </authorList>
    </citation>
    <scope>ACETYLATION [LARGE SCALE ANALYSIS] AT MET-1</scope>
    <scope>IDENTIFICATION BY MASS SPECTROMETRY [LARGE SCALE ANALYSIS]</scope>
</reference>
<reference key="47">
    <citation type="journal article" date="2009" name="Sci. Signal.">
        <title>Quantitative phosphoproteomic analysis of T cell receptor signaling reveals system-wide modulation of protein-protein interactions.</title>
        <authorList>
            <person name="Mayya V."/>
            <person name="Lundgren D.H."/>
            <person name="Hwang S.-I."/>
            <person name="Rezaul K."/>
            <person name="Wu L."/>
            <person name="Eng J.K."/>
            <person name="Rodionov V."/>
            <person name="Han D.K."/>
        </authorList>
    </citation>
    <scope>PHOSPHORYLATION [LARGE SCALE ANALYSIS] AT SER-314; THR-323 AND SER-326</scope>
    <scope>IDENTIFICATION BY MASS SPECTROMETRY [LARGE SCALE ANALYSIS]</scope>
    <source>
        <tissue>Leukemic T-cell</tissue>
    </source>
</reference>
<reference key="48">
    <citation type="journal article" date="2009" name="Science">
        <title>Stress-inducible regulation of heat shock factor 1 by the deacetylase SIRT1.</title>
        <authorList>
            <person name="Westerheide S.D."/>
            <person name="Anckar J."/>
            <person name="Stevens S.M. Jr."/>
            <person name="Sistonen L."/>
            <person name="Morimoto R.I."/>
        </authorList>
    </citation>
    <scope>DEACETYLATION AT LYS-80 BY SIRT1</scope>
    <scope>ACETYLATION AT LYS-80</scope>
    <scope>SUBCELLULAR LOCATION</scope>
    <scope>IDENTIFICATION BY MASS SPECTROMETRY</scope>
    <scope>MUTAGENESIS OF LYS-80</scope>
</reference>
<reference key="49">
    <citation type="journal article" date="2010" name="PLoS ONE">
        <title>Protein kinase A binds and activates heat shock factor 1.</title>
        <authorList>
            <person name="Murshid A."/>
            <person name="Chou S.D."/>
            <person name="Prince T."/>
            <person name="Zhang Y."/>
            <person name="Bharti A."/>
            <person name="Calderwood S.K."/>
        </authorList>
    </citation>
    <scope>INTERACTION WITH PRKACA</scope>
    <scope>PHOSPHORYLATION AT SER-320 BY PRKACA</scope>
    <scope>SUBCELLULAR LOCATION</scope>
    <scope>IDENTIFICATION BY MASS SPECTROMETRY</scope>
    <scope>MUTAGENESIS OF SER-320</scope>
</reference>
<reference key="50">
    <citation type="journal article" date="2010" name="Sci. Signal.">
        <title>Quantitative phosphoproteomics reveals widespread full phosphorylation site occupancy during mitosis.</title>
        <authorList>
            <person name="Olsen J.V."/>
            <person name="Vermeulen M."/>
            <person name="Santamaria A."/>
            <person name="Kumar C."/>
            <person name="Miller M.L."/>
            <person name="Jensen L.J."/>
            <person name="Gnad F."/>
            <person name="Cox J."/>
            <person name="Jensen T.S."/>
            <person name="Nigg E.A."/>
            <person name="Brunak S."/>
            <person name="Mann M."/>
        </authorList>
    </citation>
    <scope>PHOSPHORYLATION [LARGE SCALE ANALYSIS] AT SER-314 AND SER-326</scope>
    <scope>IDENTIFICATION BY MASS SPECTROMETRY [LARGE SCALE ANALYSIS]</scope>
    <source>
        <tissue>Cervix carcinoma</tissue>
    </source>
</reference>
<reference key="51">
    <citation type="journal article" date="2011" name="EMBO Rep.">
        <title>Transformation of eEF1Bdelta into heat-shock response transcription factor by alternative splicing.</title>
        <authorList>
            <person name="Kaitsuka T."/>
            <person name="Tomizawa K."/>
            <person name="Matsushita M."/>
        </authorList>
    </citation>
    <scope>INTERACTION WITH EEF1D</scope>
</reference>
<reference key="52">
    <citation type="journal article" date="2011" name="Sci. Signal.">
        <title>System-wide temporal characterization of the proteome and phosphoproteome of human embryonic stem cell differentiation.</title>
        <authorList>
            <person name="Rigbolt K.T."/>
            <person name="Prokhorova T.A."/>
            <person name="Akimov V."/>
            <person name="Henningsen J."/>
            <person name="Johansen P.T."/>
            <person name="Kratchmarova I."/>
            <person name="Kassem M."/>
            <person name="Mann M."/>
            <person name="Olsen J.V."/>
            <person name="Blagoev B."/>
        </authorList>
    </citation>
    <scope>IDENTIFICATION BY MASS SPECTROMETRY [LARGE SCALE ANALYSIS]</scope>
</reference>
<reference key="53">
    <citation type="journal article" date="2013" name="J. Proteome Res.">
        <title>Toward a comprehensive characterization of a human cancer cell phosphoproteome.</title>
        <authorList>
            <person name="Zhou H."/>
            <person name="Di Palma S."/>
            <person name="Preisinger C."/>
            <person name="Peng M."/>
            <person name="Polat A.N."/>
            <person name="Heck A.J."/>
            <person name="Mohammed S."/>
        </authorList>
    </citation>
    <scope>PHOSPHORYLATION [LARGE SCALE ANALYSIS] AT SER-303; SER-307 AND SER-363</scope>
    <scope>IDENTIFICATION BY MASS SPECTROMETRY [LARGE SCALE ANALYSIS]</scope>
    <source>
        <tissue>Cervix carcinoma</tissue>
        <tissue>Erythroleukemia</tissue>
    </source>
</reference>
<reference key="54">
    <citation type="journal article" date="2014" name="Cell">
        <title>Interplay of acetyltransferase EP300 and the proteasome system in regulating heat shock transcription factor 1.</title>
        <authorList>
            <person name="Raychaudhuri S."/>
            <person name="Loew C."/>
            <person name="Koerner R."/>
            <person name="Pinkert S."/>
            <person name="Theis M."/>
            <person name="Hayer-Hartl M."/>
            <person name="Buchholz F."/>
            <person name="Hartl F.U."/>
        </authorList>
    </citation>
    <scope>ACETYLATION AT LYS-80; LYS-91; LYS-118; LYS-150; LYS-188; LYS-208; LYS-298 AND LYS-524</scope>
    <scope>PHOSPHORYLATION</scope>
    <scope>UBIQUITINATION</scope>
    <scope>PROTEASOMAL DEGRADATION</scope>
    <scope>SUBCELLULAR LOCATION</scope>
    <scope>MUTAGENESIS OF LYS-80; LYS-118; LYS-208 AND LYS-298</scope>
    <scope>IDENTIFICATION BY MASS SPECTROMETRY</scope>
</reference>
<reference key="55">
    <citation type="journal article" date="2014" name="J. Proteomics">
        <title>An enzyme assisted RP-RPLC approach for in-depth analysis of human liver phosphoproteome.</title>
        <authorList>
            <person name="Bian Y."/>
            <person name="Song C."/>
            <person name="Cheng K."/>
            <person name="Dong M."/>
            <person name="Wang F."/>
            <person name="Huang J."/>
            <person name="Sun D."/>
            <person name="Wang L."/>
            <person name="Ye M."/>
            <person name="Zou H."/>
        </authorList>
    </citation>
    <scope>PHOSPHORYLATION [LARGE SCALE ANALYSIS] AT SER-303 AND SER-363</scope>
    <scope>IDENTIFICATION BY MASS SPECTROMETRY [LARGE SCALE ANALYSIS]</scope>
    <source>
        <tissue>Liver</tissue>
    </source>
</reference>
<reference key="56">
    <citation type="journal article" date="2015" name="Biochem. Biophys. Res. Commun.">
        <title>BAG3 affects the nucleocytoplasmic shuttling of HSF1 upon heat stress.</title>
        <authorList>
            <person name="Jin Y.H."/>
            <person name="Ahn S.G."/>
            <person name="Kim S.A."/>
        </authorList>
    </citation>
    <scope>INTERACTION WITH BAG3</scope>
    <scope>PHOSPHORYLATION</scope>
    <scope>SUBCELLULAR LOCATION</scope>
    <scope>NUCLEOCYTOPLASMIC SHUTTLING</scope>
</reference>
<reference key="57">
    <citation type="journal article" date="2015" name="FEBS Lett.">
        <title>HSF1 transcriptional activity is modulated by IER5 and PP2A/B55.</title>
        <authorList>
            <person name="Ishikawa Y."/>
            <person name="Kawabata S."/>
            <person name="Sakurai H."/>
        </authorList>
    </citation>
    <scope>INTERACTION WITH IER5</scope>
</reference>
<reference key="58">
    <citation type="journal article" date="2015" name="FEBS Lett.">
        <title>Immediate-early response 5 (IER5) interacts with protein phosphatase 2A and regulates the phosphorylation of ribosomal protein S6 kinase and heat shock factor 1.</title>
        <authorList>
            <person name="Kawabata S."/>
            <person name="Ishita Y."/>
            <person name="Ishikawa Y."/>
            <person name="Sakurai H."/>
        </authorList>
    </citation>
    <scope>INTERACTION WITH IER5</scope>
</reference>
<reference key="59">
    <citation type="journal article" date="2015" name="Mol. Cell. Biol.">
        <title>Uncoupling stress-inducible phosphorylation of heat shock factor 1 from its activation.</title>
        <authorList>
            <person name="Budzynski M.A."/>
            <person name="Puustinen M.C."/>
            <person name="Joutsen J."/>
            <person name="Sistonen L."/>
        </authorList>
    </citation>
    <scope>FUNCTION</scope>
    <scope>DNA-BINDING</scope>
    <scope>CHROMATIN BINDING</scope>
    <scope>SUBCELLULAR LOCATION</scope>
    <scope>PHOSPHORYLATIONS</scope>
</reference>
<reference key="60">
    <citation type="journal article" date="2015" name="Oncotarget">
        <title>Heat shock factor 1, an inhibitor of non-homologous end joining repair.</title>
        <authorList>
            <person name="Kang G.Y."/>
            <person name="Kim E.H."/>
            <person name="Lee H.J."/>
            <person name="Gil N.Y."/>
            <person name="Cha H.J."/>
            <person name="Lee Y.S."/>
        </authorList>
    </citation>
    <scope>FUNCTION IN DNA REPAIR</scope>
    <scope>INTERACTION WITH XRCC5 AND XRCC6</scope>
    <scope>SUBCELLULAR LOCATION</scope>
    <scope>MUTAGENESIS OF LYS-80; SER-216; LYS-298; SER-326 AND SER-419</scope>
</reference>
<reference key="61">
    <citation type="journal article" date="2015" name="PLoS ONE">
        <title>Client proteins and small molecule inhibitors display distinct binding preferences for constitutive and stress-induced HSP90 isoforms and their conformationally restricted mutants.</title>
        <authorList>
            <person name="Prince T.L."/>
            <person name="Kijima T."/>
            <person name="Tatokoro M."/>
            <person name="Lee S."/>
            <person name="Tsutsumi S."/>
            <person name="Yim K."/>
            <person name="Rivas C."/>
            <person name="Alarcon S."/>
            <person name="Schwartz H."/>
            <person name="Khamit-Kush K."/>
            <person name="Scroggins B.T."/>
            <person name="Beebe K."/>
            <person name="Trepel J.B."/>
            <person name="Neckers L."/>
        </authorList>
    </citation>
    <scope>INTERACTION WITH HSP90AA1 AND HSP90AB1</scope>
</reference>
<reference key="62">
    <citation type="journal article" date="2016" name="Mol. Cell. Biol.">
        <title>Heat shock factor 1 is a substrate for p38 mitogen-activated protein kinases.</title>
        <authorList>
            <person name="Dayalan Naidu S."/>
            <person name="Sutherland C."/>
            <person name="Zhang Y."/>
            <person name="Risco A."/>
            <person name="de la Vega L."/>
            <person name="Caunt C.J."/>
            <person name="Hastie C.J."/>
            <person name="Lamont D.J."/>
            <person name="Torrente L."/>
            <person name="Chowdhry S."/>
            <person name="Benjamin I.J."/>
            <person name="Keyse S.M."/>
            <person name="Cuenda A."/>
            <person name="Dinkova-Kostova A.T."/>
        </authorList>
    </citation>
    <scope>PHOSPHORYLATION AT SER-326 BY MAPK12</scope>
    <scope>SUBCELLULAR LOCATION</scope>
    <scope>MUTAGENESIS OF SER-326</scope>
</reference>
<reference key="63">
    <citation type="journal article" date="2016" name="Sci. Rep.">
        <title>IER5 generates a novel hypo-phosphorylated active form of HSF1 and contributes to tumorigenesis.</title>
        <authorList>
            <person name="Asano Y."/>
            <person name="Kawase T."/>
            <person name="Okabe A."/>
            <person name="Tsutsumi S."/>
            <person name="Ichikawa H."/>
            <person name="Tatebe S."/>
            <person name="Kitabayashi I."/>
            <person name="Tashiro F."/>
            <person name="Namiki H."/>
            <person name="Kondo T."/>
            <person name="Semba K."/>
            <person name="Aburatani H."/>
            <person name="Taya Y."/>
            <person name="Nakagama H."/>
            <person name="Ohki R."/>
        </authorList>
    </citation>
    <scope>DEPHOSPHORYLATION AT SER-121; SER-307; SER-314; THR-323 AND THR-367 BY PPP2CA</scope>
    <scope>ACETYLATION AT LYS-118</scope>
    <scope>IDENTIFICATION IN COMPLEX WITH IER5 AND PPP2CA</scope>
    <scope>INTERACTION WITH HSP90AA1 AND IER5</scope>
    <scope>FUNCTION</scope>
    <scope>SUBUNIT</scope>
    <scope>DNA-BINDING</scope>
    <scope>MUTAGENESIS OF SER-121; SER-307; SER-314; THR-323 AND THR-367</scope>
</reference>
<reference key="64">
    <citation type="journal article" date="2016" name="Sci. Rep.">
        <title>Heat shock factor 1 mediates latent HIV reactivation.</title>
        <authorList>
            <person name="Pan X.Y."/>
            <person name="Zhao W."/>
            <person name="Zeng X.Y."/>
            <person name="Lin J."/>
            <person name="Li M.M."/>
            <person name="Shen X.T."/>
            <person name="Liu S.W."/>
        </authorList>
    </citation>
    <scope>FUNCTION IN LATENT HIV-1 TRANSCRIPTIONAL REACTIVATION (MICROBIAL INFECTION)</scope>
    <scope>INTERACTION WITH CDK9; CCNT1 AND EP300</scope>
    <scope>PHOSPHORYLATION AT SER-320</scope>
    <scope>ACETYLATION</scope>
    <scope>SUBCELLULAR LOCATION</scope>
</reference>
<reference key="65">
    <citation type="journal article" date="2017" name="Nat. Struct. Mol. Biol.">
        <title>Site-specific mapping of the human SUMO proteome reveals co-modification with phosphorylation.</title>
        <authorList>
            <person name="Hendriks I.A."/>
            <person name="Lyon D."/>
            <person name="Young C."/>
            <person name="Jensen L.J."/>
            <person name="Vertegaal A.C."/>
            <person name="Nielsen M.L."/>
        </authorList>
    </citation>
    <scope>SUMOYLATION [LARGE SCALE ANALYSIS] AT LYS-91; LYS-126; LYS-131; LYS-208; LYS-224 AND LYS-298</scope>
    <scope>IDENTIFICATION BY MASS SPECTROMETRY [LARGE SCALE ANALYSIS]</scope>
</reference>
<reference key="66">
    <citation type="journal article" date="2021" name="PLoS Genet.">
        <title>FOXR1 regulates stress response pathways and is necessary for proper brain development.</title>
        <authorList>
            <person name="Mota A."/>
            <person name="Waxman H.K."/>
            <person name="Hong R."/>
            <person name="Lagani G.D."/>
            <person name="Niu S.Y."/>
            <person name="Bertherat F.L."/>
            <person name="Wolfe L."/>
            <person name="Malicdan C.M."/>
            <person name="Markello T.C."/>
            <person name="Adams D.R."/>
            <person name="Gahl W.A."/>
            <person name="Cheng C.S."/>
            <person name="Beffert U."/>
            <person name="Ho A."/>
        </authorList>
    </citation>
    <scope>FUNCTION</scope>
</reference>
<reference key="67">
    <citation type="journal article" date="2016" name="Nat. Struct. Mol. Biol.">
        <title>Structure of human heat-shock transcription factor 1 in complex with DNA.</title>
        <authorList>
            <person name="Neudegger T."/>
            <person name="Verghese J."/>
            <person name="Hayer-Hartl M."/>
            <person name="Hartl F.U."/>
            <person name="Bracher A."/>
        </authorList>
    </citation>
    <scope>X-RAY CRYSTALLOGRAPHY (2.55 ANGSTROMS) OF 1-120 IN COMPLEX WITH DNA</scope>
    <scope>DNA-BINDING</scope>
    <scope>SUBUNIT</scope>
    <scope>FUNCTION</scope>
</reference>
<proteinExistence type="evidence at protein level"/>
<name>HSF1_HUMAN</name>
<keyword id="KW-0002">3D-structure</keyword>
<keyword id="KW-0007">Acetylation</keyword>
<keyword id="KW-0010">Activator</keyword>
<keyword id="KW-0025">Alternative splicing</keyword>
<keyword id="KW-0137">Centromere</keyword>
<keyword id="KW-0158">Chromosome</keyword>
<keyword id="KW-0963">Cytoplasm</keyword>
<keyword id="KW-0206">Cytoskeleton</keyword>
<keyword id="KW-0903">Direct protein sequencing</keyword>
<keyword id="KW-0227">DNA damage</keyword>
<keyword id="KW-0234">DNA repair</keyword>
<keyword id="KW-0238">DNA-binding</keyword>
<keyword id="KW-0945">Host-virus interaction</keyword>
<keyword id="KW-1017">Isopeptide bond</keyword>
<keyword id="KW-0995">Kinetochore</keyword>
<keyword id="KW-0507">mRNA processing</keyword>
<keyword id="KW-0509">mRNA transport</keyword>
<keyword id="KW-0539">Nucleus</keyword>
<keyword id="KW-0597">Phosphoprotein</keyword>
<keyword id="KW-1267">Proteomics identification</keyword>
<keyword id="KW-1185">Reference proteome</keyword>
<keyword id="KW-0346">Stress response</keyword>
<keyword id="KW-0804">Transcription</keyword>
<keyword id="KW-0805">Transcription regulation</keyword>
<keyword id="KW-0813">Transport</keyword>
<keyword id="KW-0832">Ubl conjugation</keyword>
<gene>
    <name evidence="57" type="primary">HSF1</name>
    <name type="synonym">HSTF1</name>
</gene>
<sequence>MDLPVGPGAAGPSNVPAFLTKLWTLVSDPDTDALICWSPSGNSFHVFDQGQFAKEVLPKYFKHNNMASFVRQLNMYGFRKVVHIEQGGLVKPERDDTEFQHPCFLRGQEQLLENIKRKVTSVSTLKSEDIKIRQDSVTKLLTDVQLMKGKQECMDSKLLAMKHENEALWREVASLRQKHAQQQKVVNKLIQFLISLVQSNRILGVKRKIPLMLNDSGSAHSMPKYSRQFSLEHVHGSGPYSAPSPAYSSSSLYAPDAVASSGPIISDITELAPASPMASPGGSIDERPLSSSPLVRVKEEPPSPPQSPRVEEASPGRPSSVDTLLSPTALIDSILRESEPAPASVTALTDARGHTDTEGRPPSPPPTSTPEKCLSVACLDKNELSDHLDAMDSNLDNLQTMLSSHGFSVDTSALLDLFSPSVTVPDMSLPDLDSSLASIQELLSPQEPPRPPEAENSSPDSGKQLVHYTAQPLFLLDPGSVDTGSNDLPVLFELGEGSYFSEGDGFAEDPTISLLTGSEPPKAKDPTVS</sequence>
<comment type="function">
    <text evidence="2 6 8 10 12 13 14 17 21 22 23 24 26 31 33 36 37 40 41 42 44 45 46 47 48 50 51 52 53">Functions as a stress-inducible and DNA-binding transcription factor that plays a central role in the transcriptional activation of the heat shock response (HSR), leading to the expression of a large class of molecular chaperones, heat shock proteins (HSPs), that protect cells from cellular insult damage (PubMed:11447121, PubMed:12659875, PubMed:12917326, PubMed:15016915, PubMed:18451878, PubMed:1871105, PubMed:1986252, PubMed:25963659, PubMed:26754925, PubMed:7623826, PubMed:7760831, PubMed:8940068, PubMed:8946918, PubMed:9121459, PubMed:9341107, PubMed:9499401, PubMed:9535852, PubMed:9727490). In unstressed cells, is present in a HSP90-containing multichaperone complex that maintains it in a non-DNA-binding inactivated monomeric form (PubMed:11583998, PubMed:16278218, PubMed:9727490). Upon exposure to heat and other stress stimuli, undergoes homotrimerization and activates HSP gene transcription through binding to site-specific heat shock elements (HSEs) present in the promoter regions of HSP genes (PubMed:10359787, PubMed:11583998, PubMed:12659875, PubMed:16278218, PubMed:1871105, PubMed:1986252, PubMed:25963659, PubMed:26754925, PubMed:7623826, PubMed:7935471, PubMed:8455624, PubMed:8940068, PubMed:9499401, PubMed:9727490). Upon heat shock stress, forms a chromatin-associated complex with TTC5/STRAP and p300/EP300 to stimulate HSR transcription, therefore increasing cell survival (PubMed:18451878). Activation is reversible, and during the attenuation and recovery phase period of the HSR, returns to its unactivated form (PubMed:11583998, PubMed:16278218). Binds to inverted 5'-NGAAN-3' pentamer DNA sequences (PubMed:1986252, PubMed:26727489). Binds to chromatin at heat shock gene promoters (PubMed:25963659). Activates transcription of transcription factor FOXR1 which in turn activates transcription of the heat shock chaperones HSPA1A and HSPA6 and the antioxidant NADPH-dependent reductase DHRS2 (PubMed:34723967). Also serves several other functions independently of its transcriptional activity. Involved in the repression of Ras-induced transcriptional activation of the c-fos gene in heat-stressed cells (PubMed:9341107). Positively regulates pre-mRNA 3'-end processing and polyadenylation of HSP70 mRNA upon heat-stressed cells in a symplekin (SYMPK)-dependent manner (PubMed:14707147). Plays a role in nuclear export of stress-induced HSP70 mRNA (PubMed:17897941). Plays a role in the regulation of mitotic progression (PubMed:18794143). Also plays a role as a negative regulator of non-homologous end joining (NHEJ) repair activity in a DNA damage-dependent manner (PubMed:26359349). Involved in stress-induced cancer cell proliferation in a IER5-dependent manner (PubMed:26754925).</text>
</comment>
<comment type="function">
    <text evidence="38">(Microbial infection) Plays a role in latent human immunodeficiency virus (HIV-1) transcriptional reactivation. Binds to the HIV-1 long terminal repeat promoter (LTR) to reactivate viral transcription by recruiting cellular transcriptional elongation factors, such as CDK9, CCNT1 and EP300.</text>
</comment>
<comment type="subunit">
    <text evidence="4 5 8 12 13 14 15 17 19 21 22 24 27 28 30 32 33 34 35 36 37 38 41 43 44 45 49 51 53 56">Monomer; cytoplasmic latent and transcriptionally inactive monomeric form in unstressed cells (PubMed:11583998, PubMed:7623826, PubMed:7935376, PubMed:7935471, PubMed:8455624, PubMed:9222587, PubMed:9727490). Homotrimer; in response to stress, such as heat shock, homotrimerizes and translocates into the nucleus, binds to heat shock element (HSE) sequences in promoter of heat shock protein (HSP) genes and acquires transcriptional ability (PubMed:11583998, PubMed:26727489, PubMed:26754925, PubMed:7623826, PubMed:7935471, PubMed:8455624, PubMed:9222587, PubMed:9727490). Interacts (via monomeric form) with FKBP4; this interaction occurs in unstressed cells (PubMed:11583998). Associates (via monomeric form) with HSP90 proteins in a multichaperone complex in unnstressed cell; this association maintains HSF1 in a non-DNA-binding and transcriptional inactive form by preventing HSF1 homotrimerization (PubMed:11583998, PubMed:15661742, PubMed:16278218, PubMed:9727490). Homotrimeric transactivation activity is modulated by protein-protein interactions and post-translational modifications (PubMed:11583998, PubMed:15016915, PubMed:16554823, PubMed:26754925). Interacts with HSP90AA1; this interaction is decreased in a IER5-dependent manner, promoting HSF1 accumulation in the nucleus, homotrimerization and DNA-binding activities (PubMed:26754925). Part (via regulatory domain in the homotrimeric form) of a large heat shock-induced HSP90-dependent multichaperone complex at least composed of FKBP4, FKBP5, HSP90 proteins, PPID, PPP5C and PTGES3; this association maintains the HSF1 homotrimeric DNA-bound form in a transcriptionally inactive form (PubMed:11583998, PubMed:16278218, PubMed:9727490). Interacts with BAG3 (via BAG domain); this interaction occurs in normal and heat-shocked cells promoting nuclear shuttling of HSF1 in a BAG3-dependent manner (PubMed:26159920). Interacts (via homotrimeric and hyperphosphorylated form) with FKBP4; this interaction occurs upon heat shock in a HSP90-dependent multichaperone complex (PubMed:11583998). Interacts (via homotrimeric form preferentially) with EEF1A proteins (PubMed:15016915). In heat shocked cells, stress-denatured proteins compete with HSF1 homotrimeric DNA-bound form for association of the HSP90-dependent multichaperone complex, and hence alleviating repression of HSF1-mediated transcriptional activity (PubMed:11583998). Interacts (via homotrimeric form preferentially) with DAXX; this interaction relieves homotrimeric HSF1 from repression of its transcriptional activity by HSP90-dependent multichaperone complex upon heat shock (PubMed:15016915). Interacts (via D domain and preferentially with hyperphosphorylated form) with JNK1; this interaction occurs under both normal growth conditions and immediately upon heat shock (PubMed:10747973). Interacts (via D domain and preferentially with hyperphosphorylated form) with MAPK3; this interaction occurs upon heat shock (PubMed:10747973). Interacts with IER5 (via central region); this interaction promotes PPP2CA-induced dephosphorylation on Ser-121, Ser-307, Ser-314, Thr-323 and Thr-367 and HSF1 transactivation activity (PubMed:25816751, PubMed:26496226, PubMed:26754925). Found in a ribonucleoprotein complex composed of the HSF1 homotrimeric form, translation elongation factor eEF1A proteins and non-coding RNA heat shock RNA-1 (HSR1); this complex occurs upon heat shock and stimulates HSF1 DNA-binding activity (PubMed:16554823). Interacts (via transactivation domain) with HSPA1A/HSP70 and DNAJB1; these interactions result in the inhibition of heat shock- and HSF1-induced transcriptional activity during the attenuation and recovery phase from heat shock (PubMed:7935376, PubMed:9222587, PubMed:9499401). Interacts (via Ser-303 and Ser-307 phosphorylated form) with YWHAE; this interaction promotes HSF1 sequestration in the cytoplasm in an ERK-dependent manner (PubMed:12917326). Found in a complex with IER5 and PPP2CA (PubMed:26754925). Interacts with TPR; this interaction increases upon heat shock and stimulates export of HSP70 mRNA (PubMed:17897941). Interacts with SYMPK (via N-terminus) and CSTF2; these interactions occur upon heat shock (PubMed:14707147). Interacts (via transactivation domain) with HSPA8 (PubMed:9499401). Interacts with EEF1D; this interaction occurs at heat shock promoter element (HSE) sequences (PubMed:21597468). Interacts with MAPKAPK2 (PubMed:16278218). Interacts with PRKACA/PKA (PubMed:21085490). Interacts (via transactivation domain) with GTF2A2 (PubMed:11005381). Interacts (via transactivation domain) with GTF2B (PubMed:11005381). Interacts (via transactivation domain) with TBP (PubMed:11005381). Interacts with CDK9, CCNT1 and EP300 (PubMed:27189267). Interacts (via N-terminus) with XRCC5 (via N-terminus) and XRCC6 (via N-terminus); these interactions are direct and prevent XRCC5/XRCC6 heterodimeric binding and non-homologous end joining (NHEJ) repair activities induced by ionizing radiation (IR) (PubMed:26359349). Interacts with PLK1; this interaction occurs during the early mitotic period, increases upon heat shock but does not modulate neither HSF1 homotrimerization and DNA-binding activities (PubMed:15661742, PubMed:18794143). Interacts (via Ser-216 phosphorylated form) with CDC20; this interaction occurs in mitosis in a MAD2L1-dependent manner and prevents PLK1-stimulated degradation of HSF1 by blocking the recruitment of the SCF(BTRC) ubiquitin ligase complex (PubMed:18794143). Interacts with MAD2L1; this interaction occurs in mitosis (PubMed:18794143). Interacts with BTRC; this interaction occurs during mitosis, induces its ubiquitin-dependent degradation following stimulus-dependent phosphorylation at Ser-216, a process inhibited by CDC20 (PubMed:18794143). Interacts with HSP90AA1 and HSP90AB1 (PubMed:26517842). Forms a complex with TTC5/STRAP and p300/EP300; these interactions augment chromatin-bound HSF1 and p300/EP300 histone acetyltransferase activity (PubMed:18451878).</text>
</comment>
<comment type="interaction">
    <interactant intactId="EBI-719620">
        <id>Q00613</id>
    </interactant>
    <interactant intactId="EBI-719620">
        <id>Q00613</id>
        <label>HSF1</label>
    </interactant>
    <organismsDiffer>false</organismsDiffer>
    <experiments>2</experiments>
</comment>
<comment type="interaction">
    <interactant intactId="EBI-719620">
        <id>Q00613</id>
    </interactant>
    <interactant intactId="EBI-2556750">
        <id>Q03933</id>
        <label>HSF2</label>
    </interactant>
    <organismsDiffer>false</organismsDiffer>
    <experiments>11</experiments>
</comment>
<comment type="interaction">
    <interactant intactId="EBI-719620">
        <id>Q00613</id>
    </interactant>
    <interactant intactId="EBI-1774000">
        <id>Q5VY09</id>
        <label>IER5</label>
    </interactant>
    <organismsDiffer>false</organismsDiffer>
    <experiments>3</experiments>
</comment>
<comment type="interaction">
    <interactant intactId="EBI-719620">
        <id>Q00613</id>
    </interactant>
    <interactant intactId="EBI-712105">
        <id>Q13352</id>
        <label>ITGB3BP</label>
    </interactant>
    <organismsDiffer>false</organismsDiffer>
    <experiments>3</experiments>
</comment>
<comment type="interaction">
    <interactant intactId="EBI-719620">
        <id>Q00613</id>
    </interactant>
    <interactant intactId="EBI-2796400">
        <id>Q9UIH9</id>
        <label>KLF15</label>
    </interactant>
    <organismsDiffer>false</organismsDiffer>
    <experiments>3</experiments>
</comment>
<comment type="interaction">
    <interactant intactId="EBI-719620">
        <id>Q00613</id>
    </interactant>
    <interactant intactId="EBI-5278370">
        <id>Q14693</id>
        <label>LPIN1</label>
    </interactant>
    <organismsDiffer>false</organismsDiffer>
    <experiments>3</experiments>
</comment>
<comment type="interaction">
    <interactant intactId="EBI-719620">
        <id>Q00613</id>
    </interactant>
    <interactant intactId="EBI-993299">
        <id>P49137</id>
        <label>MAPKAPK2</label>
    </interactant>
    <organismsDiffer>false</organismsDiffer>
    <experiments>5</experiments>
</comment>
<comment type="interaction">
    <interactant intactId="EBI-719620">
        <id>Q00613</id>
    </interactant>
    <interactant intactId="EBI-2133481">
        <id>Q8N4C8</id>
        <label>MINK1</label>
    </interactant>
    <organismsDiffer>false</organismsDiffer>
    <experiments>2</experiments>
</comment>
<comment type="interaction">
    <interactant intactId="EBI-719620">
        <id>Q00613</id>
    </interactant>
    <interactant intactId="EBI-374762">
        <id>Q04759</id>
        <label>PRKCQ</label>
    </interactant>
    <organismsDiffer>false</organismsDiffer>
    <experiments>2</experiments>
</comment>
<comment type="interaction">
    <interactant intactId="EBI-719620">
        <id>Q00613</id>
    </interactant>
    <interactant intactId="EBI-351098">
        <id>O14744</id>
        <label>PRMT5</label>
    </interactant>
    <organismsDiffer>false</organismsDiffer>
    <experiments>3</experiments>
</comment>
<comment type="interaction">
    <interactant intactId="EBI-719620">
        <id>Q00613</id>
    </interactant>
    <interactant intactId="EBI-7825200">
        <id>Q96CM3</id>
        <label>RPUSD4</label>
    </interactant>
    <organismsDiffer>false</organismsDiffer>
    <experiments>3</experiments>
</comment>
<comment type="interaction">
    <interactant intactId="EBI-719620">
        <id>Q00613</id>
    </interactant>
    <interactant intactId="EBI-7797649">
        <id>P11684</id>
        <label>SCGB1A1</label>
    </interactant>
    <organismsDiffer>false</organismsDiffer>
    <experiments>3</experiments>
</comment>
<comment type="interaction">
    <interactant intactId="EBI-719620">
        <id>Q00613</id>
    </interactant>
    <interactant intactId="EBI-80140">
        <id>P63165</id>
        <label>SUMO1</label>
    </interactant>
    <organismsDiffer>false</organismsDiffer>
    <experiments>2</experiments>
</comment>
<comment type="interaction">
    <interactant intactId="EBI-719620">
        <id>Q00613</id>
    </interactant>
    <interactant intactId="EBI-21757569">
        <id>Q8NFB2</id>
        <label>TMEM185A</label>
    </interactant>
    <organismsDiffer>false</organismsDiffer>
    <experiments>3</experiments>
</comment>
<comment type="interaction">
    <interactant intactId="EBI-719620">
        <id>Q00613</id>
    </interactant>
    <interactant intactId="EBI-25857007">
        <id>Q6ZMY6-2</id>
        <label>WDR88</label>
    </interactant>
    <organismsDiffer>false</organismsDiffer>
    <experiments>3</experiments>
</comment>
<comment type="interaction">
    <interactant intactId="EBI-719620">
        <id>Q00613</id>
    </interactant>
    <interactant intactId="EBI-749023">
        <id>Q9UNY5</id>
        <label>ZNF232</label>
    </interactant>
    <organismsDiffer>false</organismsDiffer>
    <experiments>3</experiments>
</comment>
<comment type="subcellular location">
    <subcellularLocation>
        <location evidence="3 4 6 7 11 12 13 15 25 27 31 33 38 39 41 45">Nucleus</location>
    </subcellularLocation>
    <subcellularLocation>
        <location evidence="3 4 12 15 27 32 33 39 41 45">Cytoplasm</location>
    </subcellularLocation>
    <subcellularLocation>
        <location evidence="2">Nucleus</location>
        <location evidence="2">Nucleoplasm</location>
    </subcellularLocation>
    <subcellularLocation>
        <location evidence="27">Cytoplasm</location>
        <location evidence="27">Perinuclear region</location>
    </subcellularLocation>
    <subcellularLocation>
        <location evidence="24">Cytoplasm</location>
        <location evidence="24">Cytoskeleton</location>
        <location evidence="24">Spindle pole</location>
    </subcellularLocation>
    <subcellularLocation>
        <location evidence="24">Cytoplasm</location>
        <location evidence="24">Cytoskeleton</location>
        <location evidence="24">Microtubule organizing center</location>
        <location evidence="24">Centrosome</location>
    </subcellularLocation>
    <subcellularLocation>
        <location evidence="24">Chromosome</location>
        <location evidence="24">Centromere</location>
        <location evidence="24">Kinetochore</location>
    </subcellularLocation>
    <text evidence="2 3 4 6 7 11 12 13 24 27 29 31 32 33 39 45">The monomeric form is cytoplasmic in unstressed cells (PubMed:26159920, PubMed:8455624). Predominantly nuclear protein in both unstressed and heat shocked cells (PubMed:10359787, PubMed:10413683). Translocates in the nucleus upon heat shock (PubMed:8455624). Nucleocytoplasmic shuttling protein (PubMed:26159920). Colocalizes with IER5 in the nucleus (PubMed:27354066). Colocalizes with BAG3 to the nucleus upon heat stress (PubMed:26159920, PubMed:8455624). Localizes in subnuclear granules called nuclear stress bodies (nSBs) upon heat shock (PubMed:10359787, PubMed:10747973, PubMed:11447121, PubMed:11514557, PubMed:19229036, PubMed:24581496, PubMed:25963659). Colocalizes with SYMPK and SUMO1 in nSBs upon heat shock (PubMed:10359787, PubMed:11447121, PubMed:11514557, PubMed:12665592, PubMed:14707147). Colocalizes with PRKACA/PKA in the nucleus and nSBs upon heat shock (PubMed:21085490). Relocalizes from the nucleus to the cytoplasm during the attenuation and recovery phase period of the heat shock response (PubMed:26159920). Translocates in the cytoplasm in a YWHAE- and XPO1/CRM1-dependent manner (PubMed:12917326). Together with histone H2AX, redistributed in discrete nuclear DNA damage-induced foci after ionizing radiation (IR) (PubMed:26359349). Colocalizes with calcium-responsive transactivator SS18L1 at kinetochore region on the mitotic chromosomes (PubMed:18794143). Colocalizes with gamma tubulin at centrosome (PubMed:18794143). Localizes at spindle pole in metaphase (PubMed:18794143). Colocalizes with PLK1 at spindle poles during prometaphase (PubMed:18794143).</text>
</comment>
<comment type="alternative products">
    <event type="alternative splicing"/>
    <isoform>
        <id>Q00613-1</id>
        <name>Long</name>
        <sequence type="displayed"/>
    </isoform>
    <isoform>
        <id>Q00613-2</id>
        <name>Short</name>
        <sequence type="described" ref="VSP_002414 VSP_002415"/>
    </isoform>
</comment>
<comment type="domain">
    <text evidence="4 6 20 41 42 44 47 48">In unstressed cells, spontaneous homotrimerization is inhibited (PubMed:7760831, PubMed:7935471). Intramolecular interactions between the hydrophobic repeat HR-A/B and HR-C regions are necessary to maintain HSF1 in the inactive, monomeric conformation (PubMed:7623826, PubMed:7935471). Furthermore, intramolecular interactions between the regulatory domain and the nonadjacent transactivation domain prevents transcriptional activation, a process that is relieved upon heat shock (PubMed:7760831). The regulatory domain is necessary for full repression of the transcriptional activation domain in unstressed cells through its phosphorylation on Ser-303 and Ser-307 (PubMed:8946918, PubMed:9121459). In heat stressed cells, HSF1 homotrimerization occurs through formation of a three-stranded coiled-coil structure generated by intermolecular interactions between HR-A/B regions allowing DNA-binding activity (PubMed:7935471). The D domain is necessary for translocation to the nucleus, interaction with JNK1 and MAPK3 and efficient JNK1- and MAPK3-dependent phosphorylation (PubMed:10747973). The regulatory domain confers heat shock inducibility on the transcriptional transactivation domain (PubMed:7760831). The regulatory domain is necessary for transcriptional activation through its phosphorylation on Ser-230 upon heat shock (PubMed:11447121). 9aaTAD is a transactivation motif present in a large number of yeast and animal transcription factors (PubMed:17467953).</text>
</comment>
<comment type="PTM">
    <text evidence="2 4 6 8 9 10 12 16 17 24 27 29 31 32 37 39 46 47 48 51 52">Phosphorylated (PubMed:10359787, PubMed:11583998, PubMed:26159920, PubMed:9499401). Phosphorylated in unstressed cells; this phosphorylation is constitutive and implicated in the repression of HSF1 transcriptional activity (PubMed:16278218, PubMed:8940068, PubMed:8946918, PubMed:9121459). Phosphorylated on Ser-121 by MAPKAPK2; this phosphorylation promotes interaction with HSP90 proteins and inhibits HSF1 homotrimerization, DNA-binding and transactivation activities (PubMed:16278218). Phosphorylation on Ser-303 by GSK3B/GSK3-beta and on Ser-307 by MAPK3 within the regulatory domain is involved in the repression of HSF1 transcriptional activity and occurs in a RAF1-dependent manner (PubMed:10747973, PubMed:12646186, PubMed:8940068, PubMed:8946918, PubMed:9121459, PubMed:9535852). Phosphorylation on Ser-303 and Ser-307 increases HSF1 nuclear export in a YWHAE- and XPO1/CRM1-dependent manner (PubMed:12917326). Phosphorylation on Ser-307 is a prerequisite for phosphorylation on Ser-303 (PubMed:8940068). According to PubMed:9535852, Ser-303 is not phosphorylated in unstressed cells. Phosphorylated on Ser-419 by PLK1; phosphorylation promotes nuclear translocation upon heat shock (PubMed:15661742). Hyperphosphorylated upon heat shock and during the attenuation and recovery phase period of the heat shock response (PubMed:11447121, PubMed:12659875, PubMed:24581496). Phosphorylated on Thr-142; this phosphorylation increases HSF1 transactivation activity upon heat shock (PubMed:12659875). Phosphorylation on Ser-230 by CAMK2A; this phosphorylation enhances HSF1 transactivation activity upon heat shock (PubMed:11447121). Phosphorylation on Ser-326 by MAPK12; this phosphorylation enhances HSF1 nuclear translocation, homotrimerization and transactivation activities upon heat shock (PubMed:15760475, PubMed:27354066). Phosphorylated on Ser-320 by PRKACA/PKA; this phosphorylation promotes nuclear localization and transcriptional activity upon heat shock (PubMed:21085490). Phosphorylated on Ser-363 by MAPK8; this phosphorylation occurs upon heat shock, induces HSF1 translocation into nuclear stress bodies and negatively regulates transactivation activity (PubMed:10747973). Neither basal nor stress-inducible phosphorylation on Ser-230, Ser-292, Ser-303, Ser-307, Ser-314, Ser-319, Ser-320, Thr-323, Ser-326, Ser-338, Ser-344, Ser-363, Thr-367, Ser-368 and Thr-369 within the regulatory domain is involved in the regulation of HSF1 subcellular localization or DNA-binding activity; however, it negatively regulates HSF1 transactivation activity (PubMed:25963659). Phosphorylated on Ser-216 by PLK1 in the early mitotic period; this phosphorylation regulates HSF1 localization to the spindle pole, the recruitment of the SCF(BTRC) ubiquitin ligase complex inducing HSF1 degradation, and hence mitotic progression (PubMed:18794143). Dephosphorylated on Ser-121, Ser-307, Ser-314, Thr-323 and Thr-367 by phosphatase PPP2CA in an IER5-dependent manner, leading to HSF1-mediated transactivation activity (PubMed:26754925).</text>
</comment>
<comment type="PTM">
    <text evidence="7 9 11">Sumoylated with SUMO1 and SUMO2 upon heat shock in a ERK2-dependent manner (PubMed:12646186, PubMed:12665592). Sumoylated by SUMO1 on Lys-298; sumoylation occurs upon heat shock and promotes its localization to nuclear stress bodies and DNA-binding activity (PubMed:11514557). Phosphorylation on Ser-303 and Ser-307 is probably a prerequisite for sumoylation (PubMed:12646186, PubMed:12665592).</text>
</comment>
<comment type="PTM">
    <text evidence="25 29 37 38">Acetylated on Lys-118; this acetylation is decreased in a IER5-dependent manner (PubMed:26754925). Acetylated on Lys-118, Lys-208 and Lys-298; these acetylations occur in a EP300-dependent manner (PubMed:24581496, PubMed:27189267). Acetylated on Lys-80; this acetylation inhibits DNA-binding activity upon heat shock (PubMed:19229036). Deacetylated on Lys-80 by SIRT1; this deacetylation increases DNA-binding activity (PubMed:19229036).</text>
</comment>
<comment type="PTM">
    <text evidence="24 29">Ubiquitinated by SCF(BTRC) and degraded following stimulus-dependent phosphorylation at Ser-216 by PLK1 in mitosis (PubMed:18794143). Polyubiquitinated (PubMed:24581496). Undergoes proteasomal degradation upon heat shock and during the attenuation and recovery phase period of the heat shock response (PubMed:24581496).</text>
</comment>
<comment type="similarity">
    <text evidence="55">Belongs to the HSF family.</text>
</comment>
<protein>
    <recommendedName>
        <fullName evidence="55">Heat shock factor protein 1</fullName>
        <shortName>HSF 1</shortName>
    </recommendedName>
    <alternativeName>
        <fullName evidence="57">Heat shock transcription factor 1</fullName>
        <shortName>HSTF 1</shortName>
    </alternativeName>
</protein>
<feature type="chain" id="PRO_0000124567" description="Heat shock factor protein 1">
    <location>
        <begin position="1"/>
        <end position="529"/>
    </location>
</feature>
<feature type="region of interest" description="DNA-binding domain" evidence="36 44">
    <location>
        <begin position="15"/>
        <end position="120"/>
    </location>
</feature>
<feature type="region of interest" description="Hydrophobic repeat HR-A/B" evidence="44">
    <location>
        <begin position="130"/>
        <end position="203"/>
    </location>
</feature>
<feature type="region of interest" description="D domain" evidence="4">
    <location>
        <begin position="203"/>
        <end position="224"/>
    </location>
</feature>
<feature type="region of interest" description="Regulatory domain" evidence="42">
    <location>
        <begin position="221"/>
        <end position="310"/>
    </location>
</feature>
<feature type="region of interest" description="Disordered" evidence="1">
    <location>
        <begin position="295"/>
        <end position="324"/>
    </location>
</feature>
<feature type="region of interest" description="Disordered" evidence="1">
    <location>
        <begin position="336"/>
        <end position="372"/>
    </location>
</feature>
<feature type="region of interest" description="Transactivation domain" evidence="41 42">
    <location>
        <begin position="371"/>
        <end position="529"/>
    </location>
</feature>
<feature type="region of interest" description="Hydrophobic repeat HR-C" evidence="44">
    <location>
        <begin position="384"/>
        <end position="409"/>
    </location>
</feature>
<feature type="region of interest" description="Disordered" evidence="1">
    <location>
        <begin position="444"/>
        <end position="463"/>
    </location>
</feature>
<feature type="region of interest" description="Disordered" evidence="1">
    <location>
        <begin position="502"/>
        <end position="529"/>
    </location>
</feature>
<feature type="short sequence motif" description="9aaTAD" evidence="54">
    <location>
        <begin position="412"/>
        <end position="420"/>
    </location>
</feature>
<feature type="modified residue" description="N-acetylmethionine" evidence="61">
    <location>
        <position position="1"/>
    </location>
</feature>
<feature type="modified residue" description="N6-acetyllysine" evidence="25 29">
    <location>
        <position position="80"/>
    </location>
</feature>
<feature type="modified residue" description="N6-acetyllysine; alternate" evidence="29">
    <location>
        <position position="91"/>
    </location>
</feature>
<feature type="modified residue" description="N6-acetyllysine" evidence="29 37">
    <location>
        <position position="118"/>
    </location>
</feature>
<feature type="modified residue" description="Phosphoserine; by MAPKAPK2" evidence="16 17">
    <location>
        <position position="121"/>
    </location>
</feature>
<feature type="modified residue" description="Phosphothreonine; by CK2" evidence="10">
    <location>
        <position position="142"/>
    </location>
</feature>
<feature type="modified residue" description="N6-acetyllysine" evidence="29">
    <location>
        <position position="150"/>
    </location>
</feature>
<feature type="modified residue" description="N6-acetyllysine" evidence="29">
    <location>
        <position position="188"/>
    </location>
</feature>
<feature type="modified residue" description="N6-acetyllysine; alternate" evidence="29">
    <location>
        <position position="208"/>
    </location>
</feature>
<feature type="modified residue" description="Phosphoserine; by PLK1" evidence="24">
    <location>
        <position position="216"/>
    </location>
</feature>
<feature type="modified residue" description="Phosphoserine; by CAMK2A" evidence="6 16">
    <location>
        <position position="230"/>
    </location>
</feature>
<feature type="modified residue" description="Phosphoserine" evidence="46">
    <location>
        <position position="275"/>
    </location>
</feature>
<feature type="modified residue" description="Phosphoserine" evidence="16">
    <location>
        <position position="292"/>
    </location>
</feature>
<feature type="modified residue" description="N6-acetyllysine; alternate" evidence="29">
    <location>
        <position position="298"/>
    </location>
</feature>
<feature type="modified residue" description="Phosphoserine; by GSK3-beta" evidence="6 11 16 18 46 47 48 64 65">
    <location>
        <position position="303"/>
    </location>
</feature>
<feature type="modified residue" description="Phosphoserine; by MAPK3" evidence="6 16 46 47 48 52 64">
    <location>
        <position position="307"/>
    </location>
</feature>
<feature type="modified residue" description="Phosphoserine" evidence="16 59 62 63">
    <location>
        <position position="314"/>
    </location>
</feature>
<feature type="modified residue" description="Phosphoserine" evidence="16">
    <location>
        <position position="319"/>
    </location>
</feature>
<feature type="modified residue" description="Phosphoserine; by PKA" evidence="27 38">
    <location>
        <position position="320"/>
    </location>
</feature>
<feature type="modified residue" description="Phosphothreonine" evidence="58 62">
    <location>
        <position position="323"/>
    </location>
</feature>
<feature type="modified residue" description="Phosphoserine; by MAPK12" evidence="16 39 62 63">
    <location>
        <position position="326"/>
    </location>
</feature>
<feature type="modified residue" description="Phosphoserine" evidence="16">
    <location>
        <position position="344"/>
    </location>
</feature>
<feature type="modified residue" description="Phosphoserine; by MAPK8" evidence="4 16 60 64 65">
    <location>
        <position position="363"/>
    </location>
</feature>
<feature type="modified residue" description="Phosphoserine; by PLK1" evidence="15">
    <location>
        <position position="419"/>
    </location>
</feature>
<feature type="modified residue" description="Phosphoserine" evidence="16">
    <location>
        <position position="444"/>
    </location>
</feature>
<feature type="modified residue" description="N6-acetyllysine" evidence="29">
    <location>
        <position position="524"/>
    </location>
</feature>
<feature type="cross-link" description="Glycyl lysine isopeptide (Lys-Gly) (interchain with G-Cter in SUMO2); alternate" evidence="66">
    <location>
        <position position="91"/>
    </location>
</feature>
<feature type="cross-link" description="Glycyl lysine isopeptide (Lys-Gly) (interchain with G-Cter in SUMO2)" evidence="66">
    <location>
        <position position="126"/>
    </location>
</feature>
<feature type="cross-link" description="Glycyl lysine isopeptide (Lys-Gly) (interchain with G-Cter in SUMO2)" evidence="66">
    <location>
        <position position="131"/>
    </location>
</feature>
<feature type="cross-link" description="Glycyl lysine isopeptide (Lys-Gly) (interchain with G-Cter in SUMO2); alternate" evidence="66">
    <location>
        <position position="208"/>
    </location>
</feature>
<feature type="cross-link" description="Glycyl lysine isopeptide (Lys-Gly) (interchain with G-Cter in SUMO2)" evidence="66">
    <location>
        <position position="224"/>
    </location>
</feature>
<feature type="cross-link" description="Glycyl lysine isopeptide (Lys-Gly) (interchain with G-Cter in SUMO); alternate" evidence="7 11 18">
    <location>
        <position position="298"/>
    </location>
</feature>
<feature type="cross-link" description="Glycyl lysine isopeptide (Lys-Gly) (interchain with G-Cter in SUMO2); alternate" evidence="66">
    <location>
        <position position="298"/>
    </location>
</feature>
<feature type="splice variant" id="VSP_002414" description="In isoform Short." evidence="55">
    <original>GKQLVHYTAQPLFLLDPGSVDTGSNDLP</original>
    <variation>AGALHSAAAVPAGPRLRGHREQRPAGAV</variation>
    <location>
        <begin position="462"/>
        <end position="489"/>
    </location>
</feature>
<feature type="splice variant" id="VSP_002415" description="In isoform Short." evidence="55">
    <location>
        <begin position="490"/>
        <end position="529"/>
    </location>
</feature>
<feature type="mutagenesis site" description="Inhibits HSE DNA-binding activity and transcriptional activation." evidence="50">
    <original>L</original>
    <variation>A</variation>
    <location>
        <position position="22"/>
    </location>
</feature>
<feature type="mutagenesis site" description="Loss of nuclear stress bodies localization. Loss of DNA-binding and transcriptional activities upon heat shock. No change in homotrimerization upon heat shock." evidence="25 29">
    <original>K</original>
    <variation>Q</variation>
    <location>
        <position position="80"/>
    </location>
</feature>
<feature type="mutagenesis site" description="Does not change interaction with XRCC5 and XRCC6. Loss of nuclear stress bodies localization. Decreased nuclear stress bodies localization. Loss of DNA-binding and transcriptional activities upon heat shock." evidence="25 29 33">
    <original>K</original>
    <variation>R</variation>
    <location>
        <position position="80"/>
    </location>
</feature>
<feature type="mutagenesis site" description="No effect on sumoylation." evidence="11">
    <original>K</original>
    <variation>R</variation>
    <location>
        <position position="91"/>
    </location>
</feature>
<feature type="mutagenesis site" description="Loss of nuclear stress bodies localization. No change in protein abundance." evidence="29">
    <original>K</original>
    <variation>Q</variation>
    <location>
        <position position="118"/>
    </location>
</feature>
<feature type="mutagenesis site" description="No change in nuclear stress bodies localization." evidence="29">
    <original>K</original>
    <variation>R</variation>
    <location>
        <position position="118"/>
    </location>
</feature>
<feature type="mutagenesis site" description="No effect on binding HSE nor on transcriptional activity." evidence="17">
    <original>T</original>
    <variation>A</variation>
    <location>
        <position position="120"/>
    </location>
</feature>
<feature type="mutagenesis site" description="Increased binding HSE and transcriptional activity. Greatly reduced binding to HSP90AA1. No effect on MAPKAPK2 binding." evidence="17">
    <original>S</original>
    <variation>A</variation>
    <location>
        <position position="121"/>
    </location>
</feature>
<feature type="mutagenesis site" description="Some inhibition of binding HSE and transcriptional activity. No change in binding HSP90AA1. Inhibits MAPKAPK2 binding. Decreased HSF1-induced expression of HSPA1A mRNA in a IER5-dependent manner; when associated with D-307; D-314; D-323 and D-367." evidence="17 37">
    <original>S</original>
    <variation>D</variation>
    <location>
        <position position="121"/>
    </location>
</feature>
<feature type="mutagenesis site" description="No effect on binding HSE nor on transcriptional activity." evidence="17">
    <original>S</original>
    <variation>A</variation>
    <location>
        <position position="123"/>
    </location>
</feature>
<feature type="mutagenesis site" description="No effect on binding HSE nor on transcriptional activity." evidence="17">
    <original>T</original>
    <variation>A</variation>
    <location>
        <position position="124"/>
    </location>
</feature>
<feature type="mutagenesis site" description="No effect on sumoylation." evidence="11">
    <original>K</original>
    <variation>R</variation>
    <location>
        <position position="126"/>
    </location>
</feature>
<feature type="mutagenesis site" description="Leads to constitutive homotrimerization and DNA-binding activities at 20 degrees Celsius. Does not lead to constitutive transactivation activity at 20 degrees Celsius. Decreased DNA-binding activity at 37 degrees Celsius." evidence="41 44">
    <original>L</original>
    <variation>K</variation>
    <location>
        <position position="140"/>
    </location>
</feature>
<feature type="mutagenesis site" description="Reduced promoter activity by about 90%. Almost no transcriptional activity when coexpressed with CK2." evidence="10">
    <original>T</original>
    <variation>A</variation>
    <location>
        <position position="142"/>
    </location>
</feature>
<feature type="mutagenesis site" description="Leads to constitutive homotrimerization and DNA-binding activities at 20 degrees Celsius. Does not lead to constitutive transactivation activity at 20 degrees Celsius. No effect on DNA-binding activity at 37 degrees Celsius." evidence="41 44">
    <original>M</original>
    <variation>A</variation>
    <location>
        <position position="147"/>
    </location>
</feature>
<feature type="mutagenesis site" description="Does not lead to constitutive homotrimerization and DNA-binding activities at 20 degrees Celsius. Loss of DNA-binding activity at 37 degrees Celsius." evidence="44">
    <original>M</original>
    <variation>E</variation>
    <location>
        <position position="147"/>
    </location>
</feature>
<feature type="mutagenesis site" description="Does not lead to constitutive homotrimerization and DNA-binding activities at 20 degrees Celsius. Loss of DNA-binding activity at 37 degrees Celsius." evidence="44">
    <original>M</original>
    <variation>K</variation>
    <location>
        <position position="147"/>
    </location>
</feature>
<feature type="mutagenesis site" description="No effect on sumoylation." evidence="11">
    <original>K</original>
    <variation>R</variation>
    <location>
        <position position="150"/>
    </location>
</feature>
<feature type="mutagenesis site" description="No effect on sumoylation." evidence="11">
    <original>K</original>
    <variation>R</variation>
    <location>
        <position position="162"/>
    </location>
</feature>
<feature type="mutagenesis site" description="Does not lead to constitutive homotrimerization and DNA-binding activities at 20 degrees Celsius. Leads to constitutive homotrimerization and DNA-binding activities at 30 degrees Celsius. No effect on DNA-binding activity at 37 degrees Celsius." evidence="44">
    <original>L</original>
    <variation>A</variation>
    <location>
        <position position="189"/>
    </location>
</feature>
<feature type="mutagenesis site" description="Leads to constitutive homotrimerization, DNA-binding and transactivation activities at 20 degrees Celsius. Decreased DNA-binding activity at 37 degrees Celsius." evidence="41 44">
    <original>L</original>
    <variation>E</variation>
    <location>
        <position position="189"/>
    </location>
</feature>
<feature type="mutagenesis site" description="Leads to constitutive homotrimerization and DNA-binding activities at 20 degrees Celsius. No effect on DNA-binding activity at 37 degrees Celsius." evidence="44">
    <original>L</original>
    <variation>K</variation>
    <location>
        <position position="189"/>
    </location>
</feature>
<feature type="mutagenesis site" description="Does not lead to constitutive homotrimerization and DNA-binding activities at 20 degrees Celsius. Leads to constitutive homotrimerization and DNA-binding activities at 30 degrees Celsius. No effect on DNA-binding activity at 37 degrees Celsius." evidence="44">
    <original>L</original>
    <variation>A</variation>
    <location>
        <position position="193"/>
    </location>
</feature>
<feature type="mutagenesis site" description="Leads to constitutive homotrimerization and DNA-binding activities at 20 degrees Celsius. Decreased DNA-binding activity at 37 degrees Celsius." evidence="44">
    <original>L</original>
    <variation>E</variation>
    <location>
        <position position="193"/>
    </location>
</feature>
<feature type="mutagenesis site" description="Leads to constitutive homotrimerization and DNA-binding activities at 20 degrees Celsius. Loss of DNA-binding activity at 37 degrees Celsius." evidence="44">
    <original>L</original>
    <variation>K</variation>
    <location>
        <position position="193"/>
    </location>
</feature>
<feature type="mutagenesis site" description="No change in nuclear stress bodies localization. Increased protein abundance." evidence="29">
    <original>K</original>
    <variation>Q</variation>
    <location>
        <position position="208"/>
    </location>
</feature>
<feature type="mutagenesis site" description="No change in nuclear stress bodies localization. No change in protein abundance." evidence="29">
    <original>K</original>
    <variation>R</variation>
    <location>
        <position position="208"/>
    </location>
</feature>
<feature type="mutagenesis site" description="Does not change interaction with XRCC5 and XRCC6. No PLK1-induced phosphorylation in mitosis. Inhibits PLK1-stimulated ubiquitinylation. Increased protein stability." evidence="24 33">
    <original>S</original>
    <variation>A</variation>
    <location>
        <position position="216"/>
    </location>
</feature>
<feature type="mutagenesis site" description="Does not change interaction with XRCC5 and XRCC6. No change in spindle pole localization. Increases weakly PLK1-stimulated ubiquitinylation. No change in protein stability. Increased interaction with BTRC." evidence="24 33">
    <original>S</original>
    <variation>E</variation>
    <location>
        <position position="216"/>
    </location>
</feature>
<feature type="mutagenesis site" description="Decreased spindle pole localization. Decreased interaction with BTRC. Increased protein stability." evidence="24">
    <original>S</original>
    <variation>N</variation>
    <location>
        <position position="216"/>
    </location>
</feature>
<feature type="mutagenesis site" description="No phosphorylation. No change in PLK1-induced phosphorylation in mitosis. No change in DNA-binding activity upon heat shock. Decreased transcriptional activity upon heat shock." evidence="6 11 24">
    <original>S</original>
    <variation>A</variation>
    <location>
        <position position="230"/>
    </location>
</feature>
<feature type="mutagenesis site" description="Mimics phosphorylation. No effect on transcriptional activity upon heat shock." evidence="6 11">
    <original>S</original>
    <variation>D</variation>
    <location>
        <position position="230"/>
    </location>
</feature>
<feature type="mutagenesis site" description="Reduced increase in heat-induced transcriptional activity." evidence="52">
    <original>S</original>
    <variation>A</variation>
    <location>
        <position position="275"/>
    </location>
</feature>
<feature type="mutagenesis site" description="Leads to weak constitutive transactivation activity at room temperature." evidence="46">
    <original>S</original>
    <variation>G</variation>
    <location>
        <position position="275"/>
    </location>
</feature>
<feature type="mutagenesis site" description="Weak decreased PLK1-induced phosphorylation. Increased nuclear localization upon heat shock." evidence="15">
    <original>S</original>
    <variation>A</variation>
    <location>
        <position position="292"/>
    </location>
</feature>
<feature type="mutagenesis site" description="No effect neither on repression of transcriptional activity at control temperature nor on transcriptional activation upon heat shock." evidence="47">
    <original>R</original>
    <variation>A</variation>
    <location>
        <position position="296"/>
    </location>
</feature>
<feature type="mutagenesis site" description="Slight effect on derepression of transcriptional activity at control temperature and on transcriptional activation upon heat shock." evidence="47">
    <original>V</original>
    <variation>A</variation>
    <location>
        <position position="297"/>
    </location>
</feature>
<feature type="mutagenesis site" description="Induces derepression of transcriptional activity at control temperature." evidence="11 47">
    <original>K</original>
    <variation>A</variation>
    <location>
        <position position="298"/>
    </location>
</feature>
<feature type="mutagenesis site" description="No change in nuclear stress bodies localization. Increased protein abundance." evidence="29">
    <original>K</original>
    <variation>Q</variation>
    <location>
        <position position="298"/>
    </location>
</feature>
<feature type="mutagenesis site" description="Abolishes sumoylation. No effect on phosphorylation of S-303 nor of S-307. No change in subcellular location to nuclear stress granules upon heat shock. Loss of colocalization with SUMO1 to nuclear stress granules upon heat shock. Does not change interaction with XRCC5 and XRCC6. No effect on binding to HSE nor on transactivation of HSP70. Increases transcriptional activity in a DAXX-dependent manner. No change in protein abundance." evidence="7 9 11 14 29 33 47">
    <original>K</original>
    <variation>R</variation>
    <location>
        <position position="298"/>
    </location>
</feature>
<feature type="mutagenesis site" description="No effect on repression of transcriptional activity at control temperature." evidence="47">
    <original>E</original>
    <variation>A</variation>
    <location>
        <position position="299"/>
    </location>
</feature>
<feature type="mutagenesis site" description="Induces derepression of transcriptional activity at control temperature." evidence="47">
    <original>E</original>
    <variation>A</variation>
    <location>
        <position position="300"/>
    </location>
</feature>
<feature type="mutagenesis site" description="No phosphorylation nor sumoylation. No change in nuclear stress granules subcellular location upon heat shock. Loss of colocalization with SUMO1 to nuclear stress granules upon heat shock. Slight decrease in transcriptional activity on heat treatment. No change in PLK1-induced phosphorylation in mitosis, induces derepression of transcription activation at control temperature, abolishes sumoylation and induces 2.5-fold increase in transcriptional activity on heat treatment; when associated with A-307." evidence="9 11 24 47 48 52">
    <original>S</original>
    <variation>A</variation>
    <location>
        <position position="303"/>
    </location>
</feature>
<feature type="mutagenesis site" description="Mimics phosphorylation. No effect on in vitro sumoylation. Greatly increased transcriptional activity on heat induction. 5-fold derepression of transcriptional activity at control temperature; when associated with D-307." evidence="11 47 48 52">
    <original>S</original>
    <variation>D</variation>
    <location>
        <position position="303"/>
    </location>
</feature>
<feature type="mutagenesis site" description="Leads to constitutive transactivation activity at room temperature. Inhibits interaction with YWHAE and increases cytoplasmic localization; when associated with G-307." evidence="12 46">
    <original>S</original>
    <variation>G</variation>
    <location>
        <position position="303"/>
    </location>
</feature>
<feature type="mutagenesis site" description="No phosphorylation. Does not reduce Ser-303 phosphorylation. 1.5% increase in transcriptional activity on heat-treatment. No change in PLK1-induced phosphorylation in mitosis, induces derepression of transcription activation at control temperature, abolishes sumoylation and induces 2.5-fold increase in transcriptional activity on heat treatment; when associated with A-303." evidence="9 11 24 47 48 52">
    <original>S</original>
    <variation>A</variation>
    <location>
        <position position="307"/>
    </location>
</feature>
<feature type="mutagenesis site" description="5-fold derepression of transcriptional activity at control temperature; when associated with D-303. Decreased HSF1-induced expression of HSPA1A mRNA in a IER5-dependent manner; when associated with D-121; D-314; D-323 and D-367." evidence="37 47 48">
    <original>S</original>
    <variation>D</variation>
    <location>
        <position position="307"/>
    </location>
</feature>
<feature type="mutagenesis site" description="Leads to constitutive transactivation activity at room temperature. Inhibits interaction with YWHAE and increases cytoplasmic localization; when associated with G-303." evidence="12 46">
    <original>S</original>
    <variation>G</variation>
    <location>
        <position position="307"/>
    </location>
</feature>
<feature type="mutagenesis site" description="No effect on repression of transcriptional activity at control temperature." evidence="47">
    <original>R</original>
    <variation>A</variation>
    <location>
        <position position="309"/>
    </location>
</feature>
<feature type="mutagenesis site" description="No effect neither on repression of transcriptional activity at control temperature nor on transcriptional activation upon heat shock." evidence="47">
    <original>E</original>
    <variation>A</variation>
    <location>
        <position position="311"/>
    </location>
</feature>
<feature type="mutagenesis site" description="Weak decreased PLK1-induced phosphorylation." evidence="15">
    <original>S</original>
    <variation>A</variation>
    <location>
        <position position="314"/>
    </location>
</feature>
<feature type="mutagenesis site" description="Decreased HSF1-induced expression of HSPA1A mRNA in a IER5-dependent manner; when associated with D-121; D-307; D-323 and D-367." evidence="37">
    <original>S</original>
    <variation>D</variation>
    <location>
        <position position="314"/>
    </location>
</feature>
<feature type="mutagenesis site" description="Weak decreased PLK1-induced phosphorylation." evidence="15">
    <original>S</original>
    <variation>A</variation>
    <location>
        <position position="319"/>
    </location>
</feature>
<feature type="mutagenesis site" description="Decreased nuclear localization and transcriptional activity upon heat shock." evidence="27">
    <original>S</original>
    <variation>A</variation>
    <location>
        <position position="320"/>
    </location>
</feature>
<feature type="mutagenesis site" description="Increased nuclear localization and transcriptional activity upon heat shock." evidence="27">
    <original>S</original>
    <variation>D</variation>
    <location>
        <position position="320"/>
    </location>
</feature>
<feature type="mutagenesis site" description="Decreased HSF1-induced expression of HSPA1A mRNA in a IER5-dependent manner; when associated with D-121; D-307; D-314 and D-367." evidence="37">
    <original>T</original>
    <variation>D</variation>
    <location>
        <position position="323"/>
    </location>
</feature>
<feature type="mutagenesis site" description="No phosphorylation. Increased nuclear localization upon heat shock. No effect on oligomerization, DNA-binding activities and nuclear localization. Significant decrease in transcriptional activity by heat shock. Decreases transcriptional activity in a DAXX-dependent manner. Does not change interaction with XRCC5 and XRCC6. Weak decreased PLK1-induced phosphorylation." evidence="14 15 16 33 39">
    <original>S</original>
    <variation>A</variation>
    <location>
        <position position="326"/>
    </location>
</feature>
<feature type="mutagenesis site" description="Does not change interaction with XRCC5 and XRCC6." evidence="33">
    <original>S</original>
    <variation>E</variation>
    <location>
        <position position="326"/>
    </location>
</feature>
<feature type="mutagenesis site" description="Decreases MAPK8-induced phosphorylation and does not negatively regulates transactivating activity upon heat shock. No effect on sumoylation." evidence="4 11">
    <original>S</original>
    <variation>A</variation>
    <location>
        <position position="363"/>
    </location>
</feature>
<feature type="mutagenesis site" description="Decreased HSF1-induced expression of HSPA1A mRNA in a IER5-dependent manner; when associated with D-121; D-307; D-314 and D-323." evidence="37">
    <original>T</original>
    <variation>D</variation>
    <location>
        <position position="367"/>
    </location>
</feature>
<feature type="mutagenesis site" description="No effect on sumoylation." evidence="11">
    <original>K</original>
    <variation>R</variation>
    <location>
        <position position="381"/>
    </location>
</feature>
<feature type="mutagenesis site" description="Does not lead to constitutive DNA-binding activity at 20 degrees Celsius. Leads to weak constitutive DNA-binding and homotrimerization activities at 30 degrees Celsius. Decreased DNA-binding activity at 37 degrees Celsius." evidence="44">
    <original>M</original>
    <variation>A</variation>
    <location>
        <position position="391"/>
    </location>
</feature>
<feature type="mutagenesis site" description="Leads to constitutive DNA-binding and homotrimerization activities at 20 degrees Celsius. Does not lead to constitutive transactivation activity at 20 degrees Celsius. No effect on DNA-binding activity at 37 degrees Celsius." evidence="41 44">
    <original>M</original>
    <variation>E</variation>
    <location>
        <position position="391"/>
    </location>
</feature>
<feature type="mutagenesis site" description="Leads to constitutive DNA-binding and homotrimerization activities at 20 degrees Celsius. No effect on DNA-binding activity at 37 degrees Celsius." evidence="44">
    <original>M</original>
    <variation>K</variation>
    <location>
        <position position="391"/>
    </location>
</feature>
<feature type="mutagenesis site" description="Leads to constitutive DNA-binding and homotrimerization activities at 20 degrees Celsius. No effect on DNA-binding activity at 37 degrees Celsius." evidence="44">
    <original>L</original>
    <variation>E</variation>
    <location>
        <position position="395"/>
    </location>
</feature>
<feature type="mutagenesis site" description="Leads to constitutive DNA-binding and homotrimerization activities at 20 degrees Celsius. No effect on DNA-binding activity at 37 degrees Celsius." evidence="44">
    <original>L</original>
    <variation>K</variation>
    <location>
        <position position="395"/>
    </location>
</feature>
<feature type="mutagenesis site" description="Does not change interaction with XRCC5 and XRCC6. Decreased nuclear localization upon heat shock. Strongly decreases PLK1-induced phosphorylation. No change in PLK1-induced phosphorylation in mitosis." evidence="15 24 33">
    <original>S</original>
    <variation>A</variation>
    <location>
        <position position="419"/>
    </location>
</feature>
<feature type="mutagenesis site" description="Does not change interaction with XRCC5 and XRCC6." evidence="33">
    <original>S</original>
    <variation>E</variation>
    <location>
        <position position="419"/>
    </location>
</feature>
<feature type="mutagenesis site" description="No change in binding HSE nor on transcriptional activity. Decreased binding HSE; when associated with A-529." evidence="17">
    <original>T</original>
    <variation>A</variation>
    <location>
        <position position="527"/>
    </location>
</feature>
<feature type="mutagenesis site" description="No change in binding HSE nor on transcriptional activity. Decreased binding HSE; when associated with A-527." evidence="17">
    <original>S</original>
    <variation>A</variation>
    <location>
        <position position="529"/>
    </location>
</feature>
<feature type="helix" evidence="68">
    <location>
        <begin position="17"/>
        <end position="27"/>
    </location>
</feature>
<feature type="helix" evidence="68">
    <location>
        <begin position="29"/>
        <end position="31"/>
    </location>
</feature>
<feature type="turn" evidence="68">
    <location>
        <begin position="32"/>
        <end position="34"/>
    </location>
</feature>
<feature type="strand" evidence="68">
    <location>
        <begin position="35"/>
        <end position="37"/>
    </location>
</feature>
<feature type="strand" evidence="67">
    <location>
        <begin position="39"/>
        <end position="42"/>
    </location>
</feature>
<feature type="strand" evidence="68">
    <location>
        <begin position="44"/>
        <end position="47"/>
    </location>
</feature>
<feature type="helix" evidence="68">
    <location>
        <begin position="49"/>
        <end position="55"/>
    </location>
</feature>
<feature type="helix" evidence="68">
    <location>
        <begin position="57"/>
        <end position="60"/>
    </location>
</feature>
<feature type="helix" evidence="68">
    <location>
        <begin position="66"/>
        <end position="75"/>
    </location>
</feature>
<feature type="strand" evidence="68">
    <location>
        <begin position="79"/>
        <end position="83"/>
    </location>
</feature>
<feature type="strand" evidence="69">
    <location>
        <begin position="87"/>
        <end position="89"/>
    </location>
</feature>
<feature type="strand" evidence="68">
    <location>
        <begin position="96"/>
        <end position="100"/>
    </location>
</feature>
<feature type="helix" evidence="68">
    <location>
        <begin position="109"/>
        <end position="114"/>
    </location>
</feature>
<organism>
    <name type="scientific">Homo sapiens</name>
    <name type="common">Human</name>
    <dbReference type="NCBI Taxonomy" id="9606"/>
    <lineage>
        <taxon>Eukaryota</taxon>
        <taxon>Metazoa</taxon>
        <taxon>Chordata</taxon>
        <taxon>Craniata</taxon>
        <taxon>Vertebrata</taxon>
        <taxon>Euteleostomi</taxon>
        <taxon>Mammalia</taxon>
        <taxon>Eutheria</taxon>
        <taxon>Euarchontoglires</taxon>
        <taxon>Primates</taxon>
        <taxon>Haplorrhini</taxon>
        <taxon>Catarrhini</taxon>
        <taxon>Hominidae</taxon>
        <taxon>Homo</taxon>
    </lineage>
</organism>
<evidence type="ECO:0000256" key="1">
    <source>
        <dbReference type="SAM" id="MobiDB-lite"/>
    </source>
</evidence>
<evidence type="ECO:0000269" key="2">
    <source>
    </source>
</evidence>
<evidence type="ECO:0000269" key="3">
    <source>
    </source>
</evidence>
<evidence type="ECO:0000269" key="4">
    <source>
    </source>
</evidence>
<evidence type="ECO:0000269" key="5">
    <source>
    </source>
</evidence>
<evidence type="ECO:0000269" key="6">
    <source>
    </source>
</evidence>
<evidence type="ECO:0000269" key="7">
    <source>
    </source>
</evidence>
<evidence type="ECO:0000269" key="8">
    <source>
    </source>
</evidence>
<evidence type="ECO:0000269" key="9">
    <source>
    </source>
</evidence>
<evidence type="ECO:0000269" key="10">
    <source>
    </source>
</evidence>
<evidence type="ECO:0000269" key="11">
    <source>
    </source>
</evidence>
<evidence type="ECO:0000269" key="12">
    <source>
    </source>
</evidence>
<evidence type="ECO:0000269" key="13">
    <source>
    </source>
</evidence>
<evidence type="ECO:0000269" key="14">
    <source>
    </source>
</evidence>
<evidence type="ECO:0000269" key="15">
    <source>
    </source>
</evidence>
<evidence type="ECO:0000269" key="16">
    <source>
    </source>
</evidence>
<evidence type="ECO:0000269" key="17">
    <source>
    </source>
</evidence>
<evidence type="ECO:0000269" key="18">
    <source>
    </source>
</evidence>
<evidence type="ECO:0000269" key="19">
    <source>
    </source>
</evidence>
<evidence type="ECO:0000269" key="20">
    <source>
    </source>
</evidence>
<evidence type="ECO:0000269" key="21">
    <source>
    </source>
</evidence>
<evidence type="ECO:0000269" key="22">
    <source>
    </source>
</evidence>
<evidence type="ECO:0000269" key="23">
    <source>
    </source>
</evidence>
<evidence type="ECO:0000269" key="24">
    <source>
    </source>
</evidence>
<evidence type="ECO:0000269" key="25">
    <source>
    </source>
</evidence>
<evidence type="ECO:0000269" key="26">
    <source>
    </source>
</evidence>
<evidence type="ECO:0000269" key="27">
    <source>
    </source>
</evidence>
<evidence type="ECO:0000269" key="28">
    <source>
    </source>
</evidence>
<evidence type="ECO:0000269" key="29">
    <source>
    </source>
</evidence>
<evidence type="ECO:0000269" key="30">
    <source>
    </source>
</evidence>
<evidence type="ECO:0000269" key="31">
    <source>
    </source>
</evidence>
<evidence type="ECO:0000269" key="32">
    <source>
    </source>
</evidence>
<evidence type="ECO:0000269" key="33">
    <source>
    </source>
</evidence>
<evidence type="ECO:0000269" key="34">
    <source>
    </source>
</evidence>
<evidence type="ECO:0000269" key="35">
    <source>
    </source>
</evidence>
<evidence type="ECO:0000269" key="36">
    <source>
    </source>
</evidence>
<evidence type="ECO:0000269" key="37">
    <source>
    </source>
</evidence>
<evidence type="ECO:0000269" key="38">
    <source>
    </source>
</evidence>
<evidence type="ECO:0000269" key="39">
    <source>
    </source>
</evidence>
<evidence type="ECO:0000269" key="40">
    <source>
    </source>
</evidence>
<evidence type="ECO:0000269" key="41">
    <source>
    </source>
</evidence>
<evidence type="ECO:0000269" key="42">
    <source>
    </source>
</evidence>
<evidence type="ECO:0000269" key="43">
    <source>
    </source>
</evidence>
<evidence type="ECO:0000269" key="44">
    <source>
    </source>
</evidence>
<evidence type="ECO:0000269" key="45">
    <source>
    </source>
</evidence>
<evidence type="ECO:0000269" key="46">
    <source>
    </source>
</evidence>
<evidence type="ECO:0000269" key="47">
    <source>
    </source>
</evidence>
<evidence type="ECO:0000269" key="48">
    <source>
    </source>
</evidence>
<evidence type="ECO:0000269" key="49">
    <source>
    </source>
</evidence>
<evidence type="ECO:0000269" key="50">
    <source>
    </source>
</evidence>
<evidence type="ECO:0000269" key="51">
    <source>
    </source>
</evidence>
<evidence type="ECO:0000269" key="52">
    <source>
    </source>
</evidence>
<evidence type="ECO:0000269" key="53">
    <source>
    </source>
</evidence>
<evidence type="ECO:0000303" key="54">
    <source>
    </source>
</evidence>
<evidence type="ECO:0000305" key="55"/>
<evidence type="ECO:0000305" key="56">
    <source>
    </source>
</evidence>
<evidence type="ECO:0000312" key="57">
    <source>
        <dbReference type="HGNC" id="HGNC:5224"/>
    </source>
</evidence>
<evidence type="ECO:0007744" key="58">
    <source>
    </source>
</evidence>
<evidence type="ECO:0007744" key="59">
    <source>
    </source>
</evidence>
<evidence type="ECO:0007744" key="60">
    <source>
    </source>
</evidence>
<evidence type="ECO:0007744" key="61">
    <source>
    </source>
</evidence>
<evidence type="ECO:0007744" key="62">
    <source>
    </source>
</evidence>
<evidence type="ECO:0007744" key="63">
    <source>
    </source>
</evidence>
<evidence type="ECO:0007744" key="64">
    <source>
    </source>
</evidence>
<evidence type="ECO:0007744" key="65">
    <source>
    </source>
</evidence>
<evidence type="ECO:0007744" key="66">
    <source>
    </source>
</evidence>
<evidence type="ECO:0007829" key="67">
    <source>
        <dbReference type="PDB" id="5D5U"/>
    </source>
</evidence>
<evidence type="ECO:0007829" key="68">
    <source>
        <dbReference type="PDB" id="5HDN"/>
    </source>
</evidence>
<evidence type="ECO:0007829" key="69">
    <source>
        <dbReference type="PDB" id="7DCJ"/>
    </source>
</evidence>
<accession>Q00613</accession>
<accession>A8K4L0</accession>
<accession>A8MW26</accession>
<accession>Q53XT4</accession>